<evidence type="ECO:0000250" key="1"/>
<evidence type="ECO:0000250" key="2">
    <source>
        <dbReference type="UniProtKB" id="P70673"/>
    </source>
</evidence>
<evidence type="ECO:0000269" key="3">
    <source>
    </source>
</evidence>
<evidence type="ECO:0000269" key="4">
    <source>
    </source>
</evidence>
<evidence type="ECO:0000269" key="5">
    <source>
    </source>
</evidence>
<evidence type="ECO:0000269" key="6">
    <source>
    </source>
</evidence>
<evidence type="ECO:0000269" key="7">
    <source>
    </source>
</evidence>
<evidence type="ECO:0000269" key="8">
    <source>
    </source>
</evidence>
<evidence type="ECO:0000269" key="9">
    <source>
    </source>
</evidence>
<evidence type="ECO:0000269" key="10">
    <source>
    </source>
</evidence>
<evidence type="ECO:0000269" key="11">
    <source>
    </source>
</evidence>
<evidence type="ECO:0000269" key="12">
    <source>
    </source>
</evidence>
<evidence type="ECO:0000269" key="13">
    <source>
    </source>
</evidence>
<evidence type="ECO:0000269" key="14">
    <source>
    </source>
</evidence>
<evidence type="ECO:0000269" key="15">
    <source>
    </source>
</evidence>
<evidence type="ECO:0000269" key="16">
    <source>
    </source>
</evidence>
<evidence type="ECO:0000269" key="17">
    <source>
    </source>
</evidence>
<evidence type="ECO:0000269" key="18">
    <source>
    </source>
</evidence>
<evidence type="ECO:0000269" key="19">
    <source>
    </source>
</evidence>
<evidence type="ECO:0000269" key="20">
    <source>
    </source>
</evidence>
<evidence type="ECO:0000269" key="21">
    <source>
    </source>
</evidence>
<evidence type="ECO:0000269" key="22">
    <source>
    </source>
</evidence>
<evidence type="ECO:0000269" key="23">
    <source>
    </source>
</evidence>
<evidence type="ECO:0000269" key="24">
    <source>
    </source>
</evidence>
<evidence type="ECO:0000269" key="25">
    <source>
    </source>
</evidence>
<evidence type="ECO:0000269" key="26">
    <source>
    </source>
</evidence>
<evidence type="ECO:0000269" key="27">
    <source>
    </source>
</evidence>
<evidence type="ECO:0000269" key="28">
    <source>
    </source>
</evidence>
<evidence type="ECO:0000269" key="29">
    <source>
    </source>
</evidence>
<evidence type="ECO:0000269" key="30">
    <source>
    </source>
</evidence>
<evidence type="ECO:0000269" key="31">
    <source>
    </source>
</evidence>
<evidence type="ECO:0000269" key="32">
    <source>
    </source>
</evidence>
<evidence type="ECO:0000269" key="33">
    <source>
    </source>
</evidence>
<evidence type="ECO:0000269" key="34">
    <source>
    </source>
</evidence>
<evidence type="ECO:0000269" key="35">
    <source>
    </source>
</evidence>
<evidence type="ECO:0000269" key="36">
    <source>
    </source>
</evidence>
<evidence type="ECO:0000269" key="37">
    <source>
    </source>
</evidence>
<evidence type="ECO:0000269" key="38">
    <source>
    </source>
</evidence>
<evidence type="ECO:0000269" key="39">
    <source>
    </source>
</evidence>
<evidence type="ECO:0000269" key="40">
    <source>
    </source>
</evidence>
<evidence type="ECO:0000269" key="41">
    <source>
    </source>
</evidence>
<evidence type="ECO:0000269" key="42">
    <source>
    </source>
</evidence>
<evidence type="ECO:0000303" key="43">
    <source>
    </source>
</evidence>
<evidence type="ECO:0000303" key="44">
    <source>
    </source>
</evidence>
<evidence type="ECO:0000303" key="45">
    <source>
    </source>
</evidence>
<evidence type="ECO:0000303" key="46">
    <source>
    </source>
</evidence>
<evidence type="ECO:0000305" key="47"/>
<evidence type="ECO:0000305" key="48">
    <source>
    </source>
</evidence>
<evidence type="ECO:0007744" key="49">
    <source>
        <dbReference type="PDB" id="6C3O"/>
    </source>
</evidence>
<evidence type="ECO:0007744" key="50">
    <source>
        <dbReference type="PDB" id="6C3P"/>
    </source>
</evidence>
<evidence type="ECO:0007744" key="51">
    <source>
        <dbReference type="PDB" id="7S5T"/>
    </source>
</evidence>
<evidence type="ECO:0007744" key="52">
    <source>
        <dbReference type="PDB" id="7S5X"/>
    </source>
</evidence>
<evidence type="ECO:0007744" key="53">
    <source>
        <dbReference type="PDB" id="7S5Y"/>
    </source>
</evidence>
<evidence type="ECO:0007744" key="54">
    <source>
        <dbReference type="PDB" id="7S5Z"/>
    </source>
</evidence>
<evidence type="ECO:0007744" key="55">
    <source>
        <dbReference type="PDB" id="7S60"/>
    </source>
</evidence>
<evidence type="ECO:0007744" key="56">
    <source>
        <dbReference type="PDB" id="7S61"/>
    </source>
</evidence>
<evidence type="ECO:0007829" key="57">
    <source>
        <dbReference type="PDB" id="7S5T"/>
    </source>
</evidence>
<accession>Q14654</accession>
<accession>B4DWI4</accession>
<accession>E9PNK0</accession>
<accession>Q2M1H7</accession>
<accession>Q58EX3</accession>
<accession>Q8IW96</accession>
<dbReference type="EMBL" id="D50582">
    <property type="protein sequence ID" value="BAA09131.1"/>
    <property type="molecule type" value="Genomic_DNA"/>
</dbReference>
<dbReference type="EMBL" id="AK301550">
    <property type="protein sequence ID" value="BAG63046.1"/>
    <property type="molecule type" value="mRNA"/>
</dbReference>
<dbReference type="EMBL" id="AC124798">
    <property type="status" value="NOT_ANNOTATED_CDS"/>
    <property type="molecule type" value="Genomic_DNA"/>
</dbReference>
<dbReference type="EMBL" id="BC064497">
    <property type="protein sequence ID" value="AAH64497.1"/>
    <property type="molecule type" value="mRNA"/>
</dbReference>
<dbReference type="EMBL" id="BC040617">
    <property type="protein sequence ID" value="AAH40617.1"/>
    <property type="status" value="ALT_INIT"/>
    <property type="molecule type" value="mRNA"/>
</dbReference>
<dbReference type="EMBL" id="BC112358">
    <property type="protein sequence ID" value="AAI12359.1"/>
    <property type="molecule type" value="mRNA"/>
</dbReference>
<dbReference type="CCDS" id="CCDS31436.1">
    <molecule id="Q14654-1"/>
</dbReference>
<dbReference type="CCDS" id="CCDS53606.1">
    <molecule id="Q14654-2"/>
</dbReference>
<dbReference type="PIR" id="A57616">
    <property type="entry name" value="A57616"/>
</dbReference>
<dbReference type="RefSeq" id="NP_000516.3">
    <molecule id="Q14654-1"/>
    <property type="nucleotide sequence ID" value="NM_000525.3"/>
</dbReference>
<dbReference type="RefSeq" id="NP_001159762.1">
    <molecule id="Q14654-2"/>
    <property type="nucleotide sequence ID" value="NM_001166290.2"/>
</dbReference>
<dbReference type="RefSeq" id="NP_001364225.1">
    <molecule id="Q14654-2"/>
    <property type="nucleotide sequence ID" value="NM_001377296.1"/>
</dbReference>
<dbReference type="RefSeq" id="NP_001364226.1">
    <molecule id="Q14654-2"/>
    <property type="nucleotide sequence ID" value="NM_001377297.1"/>
</dbReference>
<dbReference type="PDB" id="6C3O">
    <property type="method" value="EM"/>
    <property type="resolution" value="3.90 A"/>
    <property type="chains" value="A/B/C/D=1-390"/>
</dbReference>
<dbReference type="PDB" id="6C3P">
    <property type="method" value="EM"/>
    <property type="resolution" value="5.60 A"/>
    <property type="chains" value="A/B/C/D=1-390"/>
</dbReference>
<dbReference type="PDB" id="7S5T">
    <property type="method" value="EM"/>
    <property type="resolution" value="3.10 A"/>
    <property type="chains" value="A/B/C/D=1-390"/>
</dbReference>
<dbReference type="PDB" id="7S5X">
    <property type="method" value="EM"/>
    <property type="resolution" value="3.70 A"/>
    <property type="chains" value="A/B/C/D=1-390"/>
</dbReference>
<dbReference type="PDB" id="7S5Y">
    <property type="method" value="EM"/>
    <property type="resolution" value="3.90 A"/>
    <property type="chains" value="A/B/C/D=1-390"/>
</dbReference>
<dbReference type="PDB" id="7S5Z">
    <property type="method" value="EM"/>
    <property type="resolution" value="3.90 A"/>
    <property type="chains" value="A/B/C/D=1-390"/>
</dbReference>
<dbReference type="PDB" id="7S60">
    <property type="method" value="EM"/>
    <property type="resolution" value="3.70 A"/>
    <property type="chains" value="A/B/C/D=1-390"/>
</dbReference>
<dbReference type="PDB" id="7S61">
    <property type="method" value="EM"/>
    <property type="resolution" value="4.00 A"/>
    <property type="chains" value="A/B/C/D=1-390"/>
</dbReference>
<dbReference type="PDBsum" id="6C3O"/>
<dbReference type="PDBsum" id="6C3P"/>
<dbReference type="PDBsum" id="7S5T"/>
<dbReference type="PDBsum" id="7S5X"/>
<dbReference type="PDBsum" id="7S5Y"/>
<dbReference type="PDBsum" id="7S5Z"/>
<dbReference type="PDBsum" id="7S60"/>
<dbReference type="PDBsum" id="7S61"/>
<dbReference type="EMDB" id="EMD-7338"/>
<dbReference type="EMDB" id="EMD-7339"/>
<dbReference type="SMR" id="Q14654"/>
<dbReference type="BioGRID" id="109969">
    <property type="interactions" value="26"/>
</dbReference>
<dbReference type="ComplexPortal" id="CPX-195">
    <property type="entry name" value="Inward rectifying potassium channel complex, Kir6.2-SUR1"/>
</dbReference>
<dbReference type="ComplexPortal" id="CPX-197">
    <property type="entry name" value="Inward rectifying potassium channel complex, Kir6.2-SUR2A"/>
</dbReference>
<dbReference type="ComplexPortal" id="CPX-199">
    <property type="entry name" value="Inward rectifying potassium channel complex, Kir6.2-SUR2B"/>
</dbReference>
<dbReference type="CORUM" id="Q14654"/>
<dbReference type="DIP" id="DIP-58643N"/>
<dbReference type="ELM" id="Q14654"/>
<dbReference type="FunCoup" id="Q14654">
    <property type="interactions" value="112"/>
</dbReference>
<dbReference type="IntAct" id="Q14654">
    <property type="interactions" value="18"/>
</dbReference>
<dbReference type="STRING" id="9606.ENSP00000345708"/>
<dbReference type="BindingDB" id="Q14654"/>
<dbReference type="ChEMBL" id="CHEMBL1886"/>
<dbReference type="DrugBank" id="DB11148">
    <property type="generic name" value="Butamben"/>
</dbReference>
<dbReference type="DrugBank" id="DB01119">
    <property type="generic name" value="Diazoxide"/>
</dbReference>
<dbReference type="DrugBank" id="DB00222">
    <property type="generic name" value="Glimepiride"/>
</dbReference>
<dbReference type="DrugBank" id="DB01016">
    <property type="generic name" value="Glyburide"/>
</dbReference>
<dbReference type="DrugBank" id="DB00308">
    <property type="generic name" value="Ibutilide"/>
</dbReference>
<dbReference type="DrugBank" id="DB11633">
    <property type="generic name" value="Isavuconazole"/>
</dbReference>
<dbReference type="DrugBank" id="DB00922">
    <property type="generic name" value="Levosimendan"/>
</dbReference>
<dbReference type="DrugBank" id="DB00692">
    <property type="generic name" value="Phentolamine"/>
</dbReference>
<dbReference type="DrugBank" id="DB00867">
    <property type="generic name" value="Ritodrine"/>
</dbReference>
<dbReference type="DrugBank" id="DB01154">
    <property type="generic name" value="Thiamylal"/>
</dbReference>
<dbReference type="DrugBank" id="DB00839">
    <property type="generic name" value="Tolazamide"/>
</dbReference>
<dbReference type="DrugBank" id="DB00661">
    <property type="generic name" value="Verapamil"/>
</dbReference>
<dbReference type="DrugBank" id="DB01392">
    <property type="generic name" value="Yohimbine"/>
</dbReference>
<dbReference type="DrugCentral" id="Q14654"/>
<dbReference type="TCDB" id="1.A.2.1.17">
    <property type="family name" value="the inward rectifier k(+) channel (irk-c) family"/>
</dbReference>
<dbReference type="GlyGen" id="Q14654">
    <property type="glycosylation" value="1 site"/>
</dbReference>
<dbReference type="iPTMnet" id="Q14654"/>
<dbReference type="PhosphoSitePlus" id="Q14654"/>
<dbReference type="SwissPalm" id="Q14654"/>
<dbReference type="BioMuta" id="KCNJ11"/>
<dbReference type="DMDM" id="76803775"/>
<dbReference type="MassIVE" id="Q14654"/>
<dbReference type="PaxDb" id="9606-ENSP00000345708"/>
<dbReference type="PeptideAtlas" id="Q14654"/>
<dbReference type="ProteomicsDB" id="22438"/>
<dbReference type="ProteomicsDB" id="60093">
    <molecule id="Q14654-1"/>
</dbReference>
<dbReference type="Antibodypedia" id="24845">
    <property type="antibodies" value="457 antibodies from 37 providers"/>
</dbReference>
<dbReference type="DNASU" id="3767"/>
<dbReference type="Ensembl" id="ENST00000339994.5">
    <molecule id="Q14654-1"/>
    <property type="protein sequence ID" value="ENSP00000345708.4"/>
    <property type="gene ID" value="ENSG00000187486.7"/>
</dbReference>
<dbReference type="Ensembl" id="ENST00000528731.1">
    <molecule id="Q14654-2"/>
    <property type="protein sequence ID" value="ENSP00000434755.1"/>
    <property type="gene ID" value="ENSG00000187486.7"/>
</dbReference>
<dbReference type="Ensembl" id="ENST00000682350.1">
    <molecule id="Q14654-2"/>
    <property type="protein sequence ID" value="ENSP00000508090.1"/>
    <property type="gene ID" value="ENSG00000187486.7"/>
</dbReference>
<dbReference type="Ensembl" id="ENST00000682764.1">
    <molecule id="Q14654-2"/>
    <property type="protein sequence ID" value="ENSP00000506780.1"/>
    <property type="gene ID" value="ENSG00000187486.7"/>
</dbReference>
<dbReference type="GeneID" id="3767"/>
<dbReference type="KEGG" id="hsa:3767"/>
<dbReference type="MANE-Select" id="ENST00000339994.5">
    <property type="protein sequence ID" value="ENSP00000345708.4"/>
    <property type="RefSeq nucleotide sequence ID" value="NM_000525.4"/>
    <property type="RefSeq protein sequence ID" value="NP_000516.3"/>
</dbReference>
<dbReference type="UCSC" id="uc001mna.4">
    <molecule id="Q14654-1"/>
    <property type="organism name" value="human"/>
</dbReference>
<dbReference type="AGR" id="HGNC:6257"/>
<dbReference type="CTD" id="3767"/>
<dbReference type="DisGeNET" id="3767"/>
<dbReference type="GeneCards" id="KCNJ11"/>
<dbReference type="GeneReviews" id="KCNJ11"/>
<dbReference type="HGNC" id="HGNC:6257">
    <property type="gene designation" value="KCNJ11"/>
</dbReference>
<dbReference type="HPA" id="ENSG00000187486">
    <property type="expression patterns" value="Tissue enhanced (skeletal muscle, tongue)"/>
</dbReference>
<dbReference type="MalaCards" id="KCNJ11"/>
<dbReference type="MIM" id="600937">
    <property type="type" value="gene"/>
</dbReference>
<dbReference type="MIM" id="601820">
    <property type="type" value="phenotype"/>
</dbReference>
<dbReference type="MIM" id="610582">
    <property type="type" value="phenotype"/>
</dbReference>
<dbReference type="MIM" id="616329">
    <property type="type" value="phenotype"/>
</dbReference>
<dbReference type="MIM" id="618856">
    <property type="type" value="phenotype"/>
</dbReference>
<dbReference type="neXtProt" id="NX_Q14654"/>
<dbReference type="OpenTargets" id="ENSG00000187486"/>
<dbReference type="Orphanet" id="276580">
    <property type="disease" value="Autosomal dominant hyperinsulinism due to Kir6.2 deficiency"/>
</dbReference>
<dbReference type="Orphanet" id="79644">
    <property type="disease" value="Autosomal recessive hyperinsulinism due to Kir6.2 deficiency"/>
</dbReference>
<dbReference type="Orphanet" id="79134">
    <property type="disease" value="DEND syndrome"/>
</dbReference>
<dbReference type="Orphanet" id="276603">
    <property type="disease" value="Diazoxide-resistant focal hyperinsulinism due to Kir6.2 deficiency"/>
</dbReference>
<dbReference type="Orphanet" id="99989">
    <property type="disease" value="Intermediate DEND syndrome"/>
</dbReference>
<dbReference type="Orphanet" id="99885">
    <property type="disease" value="Isolated permanent neonatal diabetes mellitus"/>
</dbReference>
<dbReference type="Orphanet" id="552">
    <property type="disease" value="MODY"/>
</dbReference>
<dbReference type="Orphanet" id="99886">
    <property type="disease" value="Transient neonatal diabetes mellitus"/>
</dbReference>
<dbReference type="PharmGKB" id="PA217"/>
<dbReference type="VEuPathDB" id="HostDB:ENSG00000187486"/>
<dbReference type="eggNOG" id="KOG3827">
    <property type="taxonomic scope" value="Eukaryota"/>
</dbReference>
<dbReference type="GeneTree" id="ENSGT01130000278330"/>
<dbReference type="HOGENOM" id="CLU_022738_4_0_1"/>
<dbReference type="InParanoid" id="Q14654"/>
<dbReference type="OMA" id="FGMVWWL"/>
<dbReference type="OrthoDB" id="273257at2759"/>
<dbReference type="PAN-GO" id="Q14654">
    <property type="GO annotations" value="4 GO annotations based on evolutionary models"/>
</dbReference>
<dbReference type="PhylomeDB" id="Q14654"/>
<dbReference type="TreeFam" id="TF313676"/>
<dbReference type="PathwayCommons" id="Q14654"/>
<dbReference type="Reactome" id="R-HSA-1296025">
    <property type="pathway name" value="ATP sensitive Potassium channels"/>
</dbReference>
<dbReference type="Reactome" id="R-HSA-382556">
    <property type="pathway name" value="ABC-family proteins mediated transport"/>
</dbReference>
<dbReference type="Reactome" id="R-HSA-422356">
    <property type="pathway name" value="Regulation of insulin secretion"/>
</dbReference>
<dbReference type="Reactome" id="R-HSA-5578775">
    <property type="pathway name" value="Ion homeostasis"/>
</dbReference>
<dbReference type="Reactome" id="R-HSA-5678420">
    <property type="pathway name" value="Defective ABCC9 causes CMD10, ATFB12 and Cantu syndrome"/>
</dbReference>
<dbReference type="Reactome" id="R-HSA-5683177">
    <property type="pathway name" value="Defective ABCC8 can cause hypo- and hyper-glycemias"/>
</dbReference>
<dbReference type="SignaLink" id="Q14654"/>
<dbReference type="SIGNOR" id="Q14654"/>
<dbReference type="BioGRID-ORCS" id="3767">
    <property type="hits" value="19 hits in 1170 CRISPR screens"/>
</dbReference>
<dbReference type="ChiTaRS" id="KCNJ11">
    <property type="organism name" value="human"/>
</dbReference>
<dbReference type="GeneWiki" id="Kir6.2"/>
<dbReference type="GenomeRNAi" id="3767"/>
<dbReference type="Pharos" id="Q14654">
    <property type="development level" value="Tclin"/>
</dbReference>
<dbReference type="PRO" id="PR:Q14654"/>
<dbReference type="Proteomes" id="UP000005640">
    <property type="component" value="Chromosome 11"/>
</dbReference>
<dbReference type="RNAct" id="Q14654">
    <property type="molecule type" value="protein"/>
</dbReference>
<dbReference type="Bgee" id="ENSG00000187486">
    <property type="expression patterns" value="Expressed in gastrocnemius and 97 other cell types or tissues"/>
</dbReference>
<dbReference type="ExpressionAtlas" id="Q14654">
    <property type="expression patterns" value="baseline and differential"/>
</dbReference>
<dbReference type="GO" id="GO:0005737">
    <property type="term" value="C:cytoplasm"/>
    <property type="evidence" value="ECO:0007669"/>
    <property type="project" value="Ensembl"/>
</dbReference>
<dbReference type="GO" id="GO:0008282">
    <property type="term" value="C:inward rectifying potassium channel"/>
    <property type="evidence" value="ECO:0000314"/>
    <property type="project" value="BHF-UCL"/>
</dbReference>
<dbReference type="GO" id="GO:0005886">
    <property type="term" value="C:plasma membrane"/>
    <property type="evidence" value="ECO:0000314"/>
    <property type="project" value="BHF-UCL"/>
</dbReference>
<dbReference type="GO" id="GO:0030315">
    <property type="term" value="C:T-tubule"/>
    <property type="evidence" value="ECO:0000250"/>
    <property type="project" value="BHF-UCL"/>
</dbReference>
<dbReference type="GO" id="GO:0030506">
    <property type="term" value="F:ankyrin binding"/>
    <property type="evidence" value="ECO:0000353"/>
    <property type="project" value="BHF-UCL"/>
</dbReference>
<dbReference type="GO" id="GO:0005524">
    <property type="term" value="F:ATP binding"/>
    <property type="evidence" value="ECO:0000250"/>
    <property type="project" value="BHF-UCL"/>
</dbReference>
<dbReference type="GO" id="GO:0015272">
    <property type="term" value="F:ATP-activated inward rectifier potassium channel activity"/>
    <property type="evidence" value="ECO:0000250"/>
    <property type="project" value="BHF-UCL"/>
</dbReference>
<dbReference type="GO" id="GO:0019829">
    <property type="term" value="F:ATPase-coupled monoatomic cation transmembrane transporter activity"/>
    <property type="evidence" value="ECO:0000250"/>
    <property type="project" value="ARUK-UCL"/>
</dbReference>
<dbReference type="GO" id="GO:0030955">
    <property type="term" value="F:potassium ion binding"/>
    <property type="evidence" value="ECO:0000304"/>
    <property type="project" value="BHF-UCL"/>
</dbReference>
<dbReference type="GO" id="GO:0044325">
    <property type="term" value="F:transmembrane transporter binding"/>
    <property type="evidence" value="ECO:0000353"/>
    <property type="project" value="BHF-UCL"/>
</dbReference>
<dbReference type="GO" id="GO:0099508">
    <property type="term" value="F:voltage-gated monoatomic ion channel activity involved in regulation of presynaptic membrane potential"/>
    <property type="evidence" value="ECO:0000314"/>
    <property type="project" value="SynGO"/>
</dbReference>
<dbReference type="GO" id="GO:0005249">
    <property type="term" value="F:voltage-gated potassium channel activity"/>
    <property type="evidence" value="ECO:0000314"/>
    <property type="project" value="BHF-UCL"/>
</dbReference>
<dbReference type="GO" id="GO:0001508">
    <property type="term" value="P:action potential"/>
    <property type="evidence" value="ECO:0007669"/>
    <property type="project" value="Ensembl"/>
</dbReference>
<dbReference type="GO" id="GO:0006915">
    <property type="term" value="P:apoptotic process"/>
    <property type="evidence" value="ECO:0007669"/>
    <property type="project" value="Ensembl"/>
</dbReference>
<dbReference type="GO" id="GO:0061762">
    <property type="term" value="P:CAMKK-AMPK signaling cascade"/>
    <property type="evidence" value="ECO:0007669"/>
    <property type="project" value="Ensembl"/>
</dbReference>
<dbReference type="GO" id="GO:0031669">
    <property type="term" value="P:cellular response to nutrient levels"/>
    <property type="evidence" value="ECO:0007669"/>
    <property type="project" value="Ensembl"/>
</dbReference>
<dbReference type="GO" id="GO:0008340">
    <property type="term" value="P:determination of adult lifespan"/>
    <property type="evidence" value="ECO:0007669"/>
    <property type="project" value="Ensembl"/>
</dbReference>
<dbReference type="GO" id="GO:0006006">
    <property type="term" value="P:glucose metabolic process"/>
    <property type="evidence" value="ECO:0000315"/>
    <property type="project" value="BHF-UCL"/>
</dbReference>
<dbReference type="GO" id="GO:0098662">
    <property type="term" value="P:inorganic cation transmembrane transport"/>
    <property type="evidence" value="ECO:0000250"/>
    <property type="project" value="ARUK-UCL"/>
</dbReference>
<dbReference type="GO" id="GO:0046676">
    <property type="term" value="P:negative regulation of insulin secretion"/>
    <property type="evidence" value="ECO:0000315"/>
    <property type="project" value="BHF-UCL"/>
</dbReference>
<dbReference type="GO" id="GO:0050877">
    <property type="term" value="P:nervous system process"/>
    <property type="evidence" value="ECO:0000315"/>
    <property type="project" value="BHF-UCL"/>
</dbReference>
<dbReference type="GO" id="GO:1990573">
    <property type="term" value="P:potassium ion import across plasma membrane"/>
    <property type="evidence" value="ECO:0000314"/>
    <property type="project" value="BHF-UCL"/>
</dbReference>
<dbReference type="GO" id="GO:0071805">
    <property type="term" value="P:potassium ion transmembrane transport"/>
    <property type="evidence" value="ECO:0000303"/>
    <property type="project" value="ARUK-UCL"/>
</dbReference>
<dbReference type="GO" id="GO:0050796">
    <property type="term" value="P:regulation of insulin secretion"/>
    <property type="evidence" value="ECO:0000315"/>
    <property type="project" value="BHF-UCL"/>
</dbReference>
<dbReference type="GO" id="GO:0042391">
    <property type="term" value="P:regulation of membrane potential"/>
    <property type="evidence" value="ECO:0000314"/>
    <property type="project" value="BHF-UCL"/>
</dbReference>
<dbReference type="GO" id="GO:0034765">
    <property type="term" value="P:regulation of monoatomic ion transmembrane transport"/>
    <property type="evidence" value="ECO:0000318"/>
    <property type="project" value="GO_Central"/>
</dbReference>
<dbReference type="GO" id="GO:0033198">
    <property type="term" value="P:response to ATP"/>
    <property type="evidence" value="ECO:0000314"/>
    <property type="project" value="BHF-UCL"/>
</dbReference>
<dbReference type="GO" id="GO:0001666">
    <property type="term" value="P:response to hypoxia"/>
    <property type="evidence" value="ECO:0007669"/>
    <property type="project" value="Ensembl"/>
</dbReference>
<dbReference type="GO" id="GO:0002931">
    <property type="term" value="P:response to ischemia"/>
    <property type="evidence" value="ECO:0007669"/>
    <property type="project" value="Ensembl"/>
</dbReference>
<dbReference type="GO" id="GO:1904638">
    <property type="term" value="P:response to resveratrol"/>
    <property type="evidence" value="ECO:0007669"/>
    <property type="project" value="Ensembl"/>
</dbReference>
<dbReference type="GO" id="GO:0009410">
    <property type="term" value="P:response to xenobiotic stimulus"/>
    <property type="evidence" value="ECO:0000315"/>
    <property type="project" value="BHF-UCL"/>
</dbReference>
<dbReference type="GO" id="GO:0003229">
    <property type="term" value="P:ventricular cardiac muscle tissue development"/>
    <property type="evidence" value="ECO:0007669"/>
    <property type="project" value="Ensembl"/>
</dbReference>
<dbReference type="FunFam" id="1.10.287.70:FF:000050">
    <property type="entry name" value="ATP-sensitive inward rectifier potassium channel 11"/>
    <property type="match status" value="1"/>
</dbReference>
<dbReference type="FunFam" id="2.60.40.1400:FF:000001">
    <property type="entry name" value="G protein-activated inward rectifier potassium channel 2"/>
    <property type="match status" value="1"/>
</dbReference>
<dbReference type="Gene3D" id="1.10.287.70">
    <property type="match status" value="1"/>
</dbReference>
<dbReference type="Gene3D" id="2.60.40.1400">
    <property type="entry name" value="G protein-activated inward rectifier potassium channel 1"/>
    <property type="match status" value="1"/>
</dbReference>
<dbReference type="InterPro" id="IPR014756">
    <property type="entry name" value="Ig_E-set"/>
</dbReference>
<dbReference type="InterPro" id="IPR041647">
    <property type="entry name" value="IRK_C"/>
</dbReference>
<dbReference type="InterPro" id="IPR016449">
    <property type="entry name" value="K_chnl_inward-rec_Kir"/>
</dbReference>
<dbReference type="InterPro" id="IPR003279">
    <property type="entry name" value="K_chnl_inward-rec_Kir6.2"/>
</dbReference>
<dbReference type="InterPro" id="IPR013518">
    <property type="entry name" value="K_chnl_inward-rec_Kir_cyto"/>
</dbReference>
<dbReference type="InterPro" id="IPR040445">
    <property type="entry name" value="Kir_TM"/>
</dbReference>
<dbReference type="PANTHER" id="PTHR11767:SF44">
    <property type="entry name" value="ATP-SENSITIVE INWARD RECTIFIER POTASSIUM CHANNEL 11"/>
    <property type="match status" value="1"/>
</dbReference>
<dbReference type="PANTHER" id="PTHR11767">
    <property type="entry name" value="INWARD RECTIFIER POTASSIUM CHANNEL"/>
    <property type="match status" value="1"/>
</dbReference>
<dbReference type="Pfam" id="PF01007">
    <property type="entry name" value="IRK"/>
    <property type="match status" value="1"/>
</dbReference>
<dbReference type="Pfam" id="PF17655">
    <property type="entry name" value="IRK_C"/>
    <property type="match status" value="1"/>
</dbReference>
<dbReference type="PIRSF" id="PIRSF005465">
    <property type="entry name" value="GIRK_kir"/>
    <property type="match status" value="1"/>
</dbReference>
<dbReference type="PRINTS" id="PR01332">
    <property type="entry name" value="KIR62CHANNEL"/>
</dbReference>
<dbReference type="PRINTS" id="PR01320">
    <property type="entry name" value="KIRCHANNEL"/>
</dbReference>
<dbReference type="SUPFAM" id="SSF81296">
    <property type="entry name" value="E set domains"/>
    <property type="match status" value="1"/>
</dbReference>
<dbReference type="SUPFAM" id="SSF81324">
    <property type="entry name" value="Voltage-gated potassium channels"/>
    <property type="match status" value="1"/>
</dbReference>
<sequence length="390" mass="43526">MLSRKGIIPEEYVLTRLAEDPAKPRYRARQRRARFVSKKGNCNVAHKNIREQGRFLQDVFTTLVDLKWPHTLLIFTMSFLCSWLLFAMAWWLIAFAHGDLAPSEGTAEPCVTSIHSFSSAFLFSIEVQVTIGFGGRMVTEECPLAILILIVQNIVGLMINAIMLGCIFMKTAQAHRRAETLIFSKHAVIALRHGRLCFMLRVGDLRKSMIISATIHMQVVRKTTSPEGEVVPLHQVDIPMENGVGGNSIFLVAPLIIYHVIDANSPLYDLAPSDLHHHQDLEIIVILEGVVETTGITTQARTSYLADEILWGQRFVPIVAEEDGRYSVDYSKFGNTVKVPTPLCTARQLDEDHSLLEALTLASARGPLRKRSVPMAKAKPKFSISPDSLS</sequence>
<feature type="chain" id="PRO_0000154957" description="ATP-sensitive inward rectifier potassium channel 11">
    <location>
        <begin position="1"/>
        <end position="390"/>
    </location>
</feature>
<feature type="topological domain" description="Cytoplasmic" evidence="48 51">
    <location>
        <begin position="1"/>
        <end position="65"/>
    </location>
</feature>
<feature type="transmembrane region" description="Helical; Name=M1" evidence="35 51">
    <location>
        <begin position="66"/>
        <end position="92"/>
    </location>
</feature>
<feature type="topological domain" description="Extracellular" evidence="48 51">
    <location>
        <begin position="93"/>
        <end position="116"/>
    </location>
</feature>
<feature type="intramembrane region" description="Discontinuously helical; Pore-forming" evidence="35 51">
    <location>
        <begin position="117"/>
        <end position="133"/>
    </location>
</feature>
<feature type="topological domain" description="Extracellular" evidence="48 51">
    <location>
        <begin position="134"/>
        <end position="142"/>
    </location>
</feature>
<feature type="transmembrane region" description="Helical; Name=M2" evidence="35 51">
    <location>
        <begin position="143"/>
        <end position="171"/>
    </location>
</feature>
<feature type="topological domain" description="Cytoplasmic" evidence="48 51">
    <location>
        <begin position="172"/>
        <end position="390"/>
    </location>
</feature>
<feature type="short sequence motif" description="Selectivity filter" evidence="47">
    <location>
        <begin position="130"/>
        <end position="135"/>
    </location>
</feature>
<feature type="binding site" evidence="34 49">
    <location>
        <position position="48"/>
    </location>
    <ligand>
        <name>ATP</name>
        <dbReference type="ChEBI" id="CHEBI:30616"/>
        <note>inhibitor</note>
    </ligand>
</feature>
<feature type="binding site" evidence="34 49">
    <location>
        <position position="50"/>
    </location>
    <ligand>
        <name>ATP</name>
        <dbReference type="ChEBI" id="CHEBI:30616"/>
        <note>inhibitor</note>
    </ligand>
</feature>
<feature type="binding site" evidence="34 49">
    <location>
        <position position="130"/>
    </location>
    <ligand>
        <name>K(+)</name>
        <dbReference type="ChEBI" id="CHEBI:29103"/>
        <label>1</label>
        <note>ligand shared between the four subunits of the homotetramer</note>
    </ligand>
</feature>
<feature type="binding site" evidence="34 49">
    <location>
        <position position="133"/>
    </location>
    <ligand>
        <name>K(+)</name>
        <dbReference type="ChEBI" id="CHEBI:29103"/>
        <label>2</label>
        <note>ligand shared between the four subunits of the homotetramer</note>
    </ligand>
</feature>
<feature type="binding site" evidence="2">
    <location>
        <position position="176"/>
    </location>
    <ligand>
        <name>a 1,2-diacyl-sn-glycero-3-phospho-(1D-myo-inositol-4,5-bisphosphate)</name>
        <dbReference type="ChEBI" id="CHEBI:58456"/>
    </ligand>
</feature>
<feature type="binding site" evidence="34 49">
    <location>
        <position position="330"/>
    </location>
    <ligand>
        <name>ATP</name>
        <dbReference type="ChEBI" id="CHEBI:30616"/>
        <note>inhibitor</note>
    </ligand>
</feature>
<feature type="site" description="Role in the control of polyamine-mediated channel gating and in the blocking by intracellular magnesium" evidence="1">
    <location>
        <position position="160"/>
    </location>
</feature>
<feature type="modified residue" description="Phosphothreonine; by MAPK1" evidence="28">
    <location>
        <position position="341"/>
    </location>
</feature>
<feature type="modified residue" description="Phosphoserine; by MAPK1" evidence="28">
    <location>
        <position position="385"/>
    </location>
</feature>
<feature type="disulfide bond" evidence="49 50 51 52 54 55 56">
    <location>
        <begin position="110"/>
        <end position="142"/>
    </location>
</feature>
<feature type="splice variant" id="VSP_045270" description="In isoform 2." evidence="43 44">
    <location>
        <begin position="1"/>
        <end position="87"/>
    </location>
</feature>
<feature type="sequence variant" id="VAR_008659" description="In dbSNP:rs587783667." evidence="41">
    <original>E</original>
    <variation>K</variation>
    <location>
        <position position="10"/>
    </location>
</feature>
<feature type="sequence variant" id="VAR_055978" description="In dbSNP:rs41309072.">
    <original>A</original>
    <variation>G</variation>
    <location>
        <position position="18"/>
    </location>
</feature>
<feature type="sequence variant" id="VAR_008660" description="In dbSNP:rs5219." evidence="4 11 18 22 37 39 41">
    <original>K</original>
    <variation>E</variation>
    <location>
        <position position="23"/>
    </location>
</feature>
<feature type="sequence variant" id="VAR_031329" description="In HHF2; dbSNP:rs141145502." evidence="18">
    <original>R</original>
    <variation>H</variation>
    <location>
        <position position="34"/>
    </location>
</feature>
<feature type="sequence variant" id="VAR_026498" description="In PNDM2; dbSNP:rs193929333." evidence="10">
    <original>F</original>
    <variation>L</variation>
    <location>
        <position position="35"/>
    </location>
</feature>
<feature type="sequence variant" id="VAR_026499" description="In PNDM2; dbSNP:rs193929333." evidence="9">
    <original>F</original>
    <variation>V</variation>
    <location>
        <position position="35"/>
    </location>
</feature>
<feature type="sequence variant" id="VAR_031330" description="In HHF2; dbSNP:rs1001873841." evidence="21">
    <original>G</original>
    <variation>D</variation>
    <location>
        <position position="40"/>
    </location>
</feature>
<feature type="sequence variant" id="VAR_031331" description="In TNDM3; increased spontaneous open probability; reduced ATP sensitivity; reduced expression at the cell surface of the functional ATP-sensitive form; dbSNP:rs80356610." evidence="17">
    <original>C</original>
    <variation>R</variation>
    <location>
        <position position="42"/>
    </location>
</feature>
<feature type="sequence variant" id="VAR_031332" description="In PNDM2." evidence="23 25">
    <original>H</original>
    <variation>Y</variation>
    <location>
        <position position="46"/>
    </location>
</feature>
<feature type="sequence variant" id="VAR_026500" description="In PNDM2; decreased inhibition by ATP; enhanced activation by Mg(2+); increased current; dbSNP:rs80356611." evidence="14 24">
    <original>R</original>
    <variation>P</variation>
    <location>
        <position position="50"/>
    </location>
</feature>
<feature type="sequence variant" id="VAR_031333" description="In PNDM2; decreased inhibition by ATP; enhanced activation by Mg(2+); increased current; dbSNP:rs80356611." evidence="23 24">
    <original>R</original>
    <variation>Q</variation>
    <location>
        <position position="50"/>
    </location>
</feature>
<feature type="sequence variant" id="VAR_026501" description="In PNDM2; with neurologic features; produces larger current and more change in ATP sensitivity than mutation associated with mild disease C-201; dbSNP:rs193929337." evidence="7 15 23">
    <original>Q</original>
    <variation>R</variation>
    <location>
        <position position="52"/>
    </location>
</feature>
<feature type="sequence variant" id="VAR_031334" description="In PNDM2; with neurologic features; dbSNP:rs80356615." evidence="23">
    <original>G</original>
    <variation>D</variation>
    <location>
        <position position="53"/>
    </location>
</feature>
<feature type="sequence variant" id="VAR_026502" description="In TNDM3; reduction in the sensitivity to ATP when compared with wild-type; dbSNP:rs80356613." evidence="16">
    <original>G</original>
    <variation>R</variation>
    <location>
        <position position="53"/>
    </location>
</feature>
<feature type="sequence variant" id="VAR_026503" description="In TNDM3; reduction in the sensitivity to ATP when compared with wild-type; dbSNP:rs80356613." evidence="16">
    <original>G</original>
    <variation>S</variation>
    <location>
        <position position="53"/>
    </location>
</feature>
<feature type="sequence variant" id="VAR_031335" description="In HHF2; does neither affect channel expression nor channel response to MgADP; dbSNP:rs1343400778." evidence="20 29">
    <original>F</original>
    <variation>L</variation>
    <location>
        <position position="55"/>
    </location>
</feature>
<feature type="sequence variant" id="VAR_026504" description="In PNDM2; with neurologic features; produces larger current and more change in ATP sensitivity than mutation associated with mild disease C-201; decreases ATP sensitivity indirectly by favoring the open conformation of the channel; dbSNP:rs80356617." evidence="7 15 23">
    <original>V</original>
    <variation>G</variation>
    <location>
        <position position="59"/>
    </location>
</feature>
<feature type="sequence variant" id="VAR_026505" description="In PNDM2; with neurologic features; dbSNP:rs80356616." evidence="7 9 10 14 23">
    <original>V</original>
    <variation>M</variation>
    <location>
        <position position="59"/>
    </location>
</feature>
<feature type="sequence variant" id="VAR_073681" description="In PNDM2; the patient also carries L-64 in cis; displays gain of function; increases the intrinsic channel open probability and decreases sensitivity toward ATP inhibition; variant L-64 associated in cis is thought to ameliorate the effect of the Y-60 mutation on the channel ATP sensitivity; dbSNP:rs387906783." evidence="31">
    <original>F</original>
    <variation>Y</variation>
    <location>
        <position position="60"/>
    </location>
</feature>
<feature type="sequence variant" id="VAR_073682" description="In PNDM2; uncertain significance; the patient also carries Y-60 in cis; only subtle effects, if any, on channel ATP sensitivity; thought to attenuate the deleterious effect of the Y-60 mutation associated in cis on the channel ATP sensitivity; dbSNP:rs115716690." evidence="31 33">
    <original>V</original>
    <variation>L</variation>
    <location>
        <position position="64"/>
    </location>
</feature>
<feature type="sequence variant" id="VAR_026506" description="In HHF2; dbSNP:rs747719667." evidence="5">
    <original>K</original>
    <variation>N</variation>
    <location>
        <position position="67"/>
    </location>
</feature>
<feature type="sequence variant" id="VAR_026507" description="In HHF2." evidence="3">
    <original>W</original>
    <variation>R</variation>
    <location>
        <position position="91"/>
    </location>
</feature>
<feature type="sequence variant" id="VAR_031336" description="In HHF2; dbSNP:rs1014454531." evidence="12 21">
    <original>A</original>
    <variation>D</variation>
    <location>
        <position position="101"/>
    </location>
</feature>
<feature type="sequence variant" id="VAR_031337" description="In HHF2; dbSNP:rs1953587696." evidence="21">
    <original>S</original>
    <variation>P</variation>
    <location>
        <position position="116"/>
    </location>
</feature>
<feature type="sequence variant" id="VAR_089778" description="Found in a patient with sulfonylurea-sensitive diabetes with onset in early adulthood; uncertain significance; results in decreased surface expression of the mutant channel; does not affect channel inhibition by ATP and stimulation by ADP; dbSNP:rs756424776." evidence="36">
    <original>S</original>
    <variation>L</variation>
    <location>
        <position position="118"/>
    </location>
</feature>
<feature type="sequence variant" id="VAR_031338" description="In HHF2; dbSNP:rs1953586783." evidence="12">
    <original>G</original>
    <variation>A</variation>
    <location>
        <position position="134"/>
    </location>
</feature>
<feature type="sequence variant" id="VAR_031339" description="In HHF2; dbSNP:rs1479483693." evidence="12 21">
    <original>R</original>
    <variation>L</variation>
    <location>
        <position position="136"/>
    </location>
</feature>
<feature type="sequence variant" id="VAR_001557" description="In HHF2; dbSNP:rs28936678." evidence="38 40">
    <original>L</original>
    <variation>P</variation>
    <location>
        <position position="147"/>
    </location>
</feature>
<feature type="sequence variant" id="VAR_031340" evidence="18 37">
    <original>I</original>
    <variation>S</variation>
    <location>
        <position position="148"/>
    </location>
</feature>
<feature type="sequence variant" id="VAR_073683" description="In HHF2; dbSNP:rs1404429785." evidence="29">
    <original>G</original>
    <variation>R</variation>
    <location>
        <position position="156"/>
    </location>
</feature>
<feature type="sequence variant" id="VAR_031341" description="In PNDM2." evidence="23 25">
    <original>L</original>
    <variation>P</variation>
    <location>
        <position position="164"/>
    </location>
</feature>
<feature type="sequence variant" id="VAR_031342" description="In PNDM2; individual also diagnosed with West syndrome; dbSNP:rs80356618." evidence="23">
    <original>C</original>
    <variation>Y</variation>
    <location>
        <position position="166"/>
    </location>
</feature>
<feature type="sequence variant" id="VAR_073684" description="In PNDM2; has severely impaired sensitivity to ATP and markedly increases open channel probability; dbSNP:rs80356620." evidence="26">
    <original>I</original>
    <variation>L</variation>
    <location>
        <position position="167"/>
    </location>
</feature>
<feature type="sequence variant" id="VAR_026508" description="In PNDM2; dbSNP:rs80356622." evidence="14">
    <original>K</original>
    <variation>N</variation>
    <location>
        <position position="170"/>
    </location>
</feature>
<feature type="sequence variant" id="VAR_026509" description="In PNDM2; dbSNP:rs80356621." evidence="14">
    <original>K</original>
    <variation>R</variation>
    <location>
        <position position="170"/>
    </location>
</feature>
<feature type="sequence variant" id="VAR_031343" description="In PNDM2." evidence="23">
    <original>K</original>
    <variation>T</variation>
    <location>
        <position position="170"/>
    </location>
</feature>
<feature type="sequence variant" id="VAR_026510" description="In TNDM3; reduction in the sensitivity to ATP when compared with wild-type; dbSNP:rs193929348." evidence="16">
    <original>I</original>
    <variation>V</variation>
    <location>
        <position position="182"/>
    </location>
</feature>
<feature type="sequence variant" id="VAR_014929" description="In dbSNP:rs5217.">
    <original>R</original>
    <variation>H</variation>
    <location>
        <position position="195"/>
    </location>
</feature>
<feature type="sequence variant" id="VAR_026511" description="In PNDM2; with neurologic features; produces smaller current and less change in ATP sensitivity than mutations associated with severe disease R-52 and G-59; dbSNP:rs80356625." evidence="7 8 10 14 15 23">
    <original>R</original>
    <variation>C</variation>
    <location>
        <position position="201"/>
    </location>
</feature>
<feature type="sequence variant" id="VAR_026512" description="In PNDM2; ability of ATP to block mutant channels greatly reduced; dbSNP:rs80356624." evidence="7 9 10 23 25">
    <original>R</original>
    <variation>H</variation>
    <location>
        <position position="201"/>
    </location>
</feature>
<feature type="sequence variant" id="VAR_031344" description="In PNDM2; dbSNP:rs80356624." evidence="23">
    <original>R</original>
    <variation>L</variation>
    <location>
        <position position="201"/>
    </location>
</feature>
<feature type="sequence variant" id="VAR_073685" description="In HHF2; dbSNP:rs577757932." evidence="29">
    <original>D</original>
    <variation>E</variation>
    <location>
        <position position="204"/>
    </location>
</feature>
<feature type="sequence variant" id="VAR_073686" description="In MODY13; dbSNP:rs587783672." evidence="32">
    <original>E</original>
    <variation>K</variation>
    <location>
        <position position="227"/>
    </location>
</feature>
<feature type="sequence variant" id="VAR_026513" description="In HHF2; impairs trafficking of the mutant channel; dbSNP:rs104894237." evidence="13">
    <original>P</original>
    <variation>L</variation>
    <location>
        <position position="254"/>
    </location>
</feature>
<feature type="sequence variant" id="VAR_031345" description="In HHF2; impairs trafficking and abolishes channel function; dbSNP:rs104894248." evidence="19">
    <original>H</original>
    <variation>R</variation>
    <location>
        <position position="259"/>
    </location>
</feature>
<feature type="sequence variant" id="VAR_031346" description="In HHF2; dbSNP:rs1554901679." evidence="12">
    <original>P</original>
    <variation>L</variation>
    <location>
        <position position="266"/>
    </location>
</feature>
<feature type="sequence variant" id="VAR_008661" description="In dbSNP:rs1800467." evidence="39 41">
    <original>L</original>
    <variation>V</variation>
    <location>
        <position position="270"/>
    </location>
</feature>
<feature type="sequence variant" id="VAR_073687" description="In HHF2; prevents the ER export and surface expression of the channel; dbSNP:rs267607196." evidence="30">
    <original>E</original>
    <variation>K</variation>
    <location>
        <position position="282"/>
    </location>
</feature>
<feature type="sequence variant" id="VAR_026514" description="In PNDM2; with neurologic features; dbSNP:rs193929353." evidence="7 23">
    <original>I</original>
    <variation>L</variation>
    <location>
        <position position="296"/>
    </location>
</feature>
<feature type="sequence variant" id="VAR_031347" description="In HHF2; dbSNP:rs74339576." evidence="12 21">
    <original>R</original>
    <variation>H</variation>
    <location>
        <position position="301"/>
    </location>
</feature>
<feature type="sequence variant" id="VAR_026515" description="In PNDM2; dbSNP:rs193929355." evidence="10">
    <original>E</original>
    <variation>K</variation>
    <location>
        <position position="322"/>
    </location>
</feature>
<feature type="sequence variant" id="VAR_026516" description="In PNDM2; dbSNP:rs193929356." evidence="9 10">
    <original>Y</original>
    <variation>C</variation>
    <location>
        <position position="330"/>
    </location>
</feature>
<feature type="sequence variant" id="VAR_031348" description="In PNDM2." evidence="23">
    <original>Y</original>
    <variation>S</variation>
    <location>
        <position position="330"/>
    </location>
</feature>
<feature type="sequence variant" id="VAR_026517" description="In PNDM2; alters gating characteristics; decreases sensitivity to inhibition by ATP and increases intrinsic open probability; dbSNP:rs193929357." evidence="9 27">
    <original>F</original>
    <variation>I</variation>
    <location>
        <position position="333"/>
    </location>
</feature>
<feature type="sequence variant" id="VAR_008662" description="In dbSNP:rs5215." evidence="4 6 11 18 22 37 39 41">
    <original>V</original>
    <variation>I</variation>
    <location>
        <position position="337"/>
    </location>
</feature>
<feature type="sequence variant" id="VAR_008663" description="In NIDDM; Afro-Caribbean; dbSNP:rs797045635." evidence="39">
    <original>L</original>
    <variation>P</variation>
    <location>
        <position position="355"/>
    </location>
</feature>
<feature type="sequence variant" id="VAR_008664" description="In NIDDM.">
    <original>P</original>
    <variation>PKP</variation>
    <location>
        <position position="380"/>
    </location>
</feature>
<feature type="sequence variant" id="VAR_008665" description="In dbSNP:rs41282930." evidence="39">
    <original>S</original>
    <variation>C</variation>
    <location>
        <position position="385"/>
    </location>
</feature>
<feature type="mutagenesis site" description="Displays gain of function; increased open state stability, reduced ATP sensitivity and increased channel activity; almost completely abolishes high affinity sensitivity to glibenclamide, an inhibitor of ATP-sensitive potassium channels." evidence="33">
    <original>V</original>
    <variation>M</variation>
    <location>
        <position position="64"/>
    </location>
</feature>
<feature type="mutagenesis site" description="The mutant channel is locked in an open conformation; when associated in cis with D-334." evidence="35">
    <original>C</original>
    <variation>S</variation>
    <location>
        <position position="166"/>
    </location>
</feature>
<feature type="mutagenesis site" description="The mutant channel is locked in an open conformation; when associated in cis with S-166." evidence="35">
    <original>G</original>
    <variation>D</variation>
    <location>
        <position position="334"/>
    </location>
</feature>
<feature type="sequence conflict" description="In Ref. 2; BAG63046." evidence="47" ref="2">
    <original>K</original>
    <variation>E</variation>
    <location>
        <position position="370"/>
    </location>
</feature>
<feature type="helix" evidence="57">
    <location>
        <begin position="52"/>
        <end position="56"/>
    </location>
</feature>
<feature type="helix" evidence="57">
    <location>
        <begin position="59"/>
        <end position="64"/>
    </location>
</feature>
<feature type="helix" evidence="57">
    <location>
        <begin position="68"/>
        <end position="96"/>
    </location>
</feature>
<feature type="helix" evidence="57">
    <location>
        <begin position="117"/>
        <end position="128"/>
    </location>
</feature>
<feature type="strand" evidence="57">
    <location>
        <begin position="134"/>
        <end position="136"/>
    </location>
</feature>
<feature type="helix" evidence="57">
    <location>
        <begin position="143"/>
        <end position="171"/>
    </location>
</feature>
<feature type="helix" evidence="57">
    <location>
        <begin position="174"/>
        <end position="180"/>
    </location>
</feature>
<feature type="strand" evidence="57">
    <location>
        <begin position="181"/>
        <end position="183"/>
    </location>
</feature>
<feature type="strand" evidence="57">
    <location>
        <begin position="185"/>
        <end position="192"/>
    </location>
</feature>
<feature type="strand" evidence="57">
    <location>
        <begin position="195"/>
        <end position="204"/>
    </location>
</feature>
<feature type="strand" evidence="57">
    <location>
        <begin position="206"/>
        <end position="208"/>
    </location>
</feature>
<feature type="strand" evidence="57">
    <location>
        <begin position="210"/>
        <end position="224"/>
    </location>
</feature>
<feature type="strand" evidence="57">
    <location>
        <begin position="230"/>
        <end position="238"/>
    </location>
</feature>
<feature type="strand" evidence="57">
    <location>
        <begin position="243"/>
        <end position="246"/>
    </location>
</feature>
<feature type="strand" evidence="57">
    <location>
        <begin position="255"/>
        <end position="260"/>
    </location>
</feature>
<feature type="turn" evidence="57">
    <location>
        <begin position="266"/>
        <end position="269"/>
    </location>
</feature>
<feature type="helix" evidence="57">
    <location>
        <begin position="272"/>
        <end position="274"/>
    </location>
</feature>
<feature type="strand" evidence="57">
    <location>
        <begin position="276"/>
        <end position="278"/>
    </location>
</feature>
<feature type="strand" evidence="57">
    <location>
        <begin position="282"/>
        <end position="291"/>
    </location>
</feature>
<feature type="turn" evidence="57">
    <location>
        <begin position="292"/>
        <end position="294"/>
    </location>
</feature>
<feature type="strand" evidence="57">
    <location>
        <begin position="297"/>
        <end position="305"/>
    </location>
</feature>
<feature type="strand" evidence="57">
    <location>
        <begin position="308"/>
        <end position="311"/>
    </location>
</feature>
<feature type="strand" evidence="57">
    <location>
        <begin position="313"/>
        <end position="315"/>
    </location>
</feature>
<feature type="strand" evidence="57">
    <location>
        <begin position="319"/>
        <end position="322"/>
    </location>
</feature>
<feature type="strand" evidence="57">
    <location>
        <begin position="325"/>
        <end position="329"/>
    </location>
</feature>
<feature type="helix" evidence="57">
    <location>
        <begin position="330"/>
        <end position="332"/>
    </location>
</feature>
<feature type="strand" evidence="57">
    <location>
        <begin position="336"/>
        <end position="338"/>
    </location>
</feature>
<feature type="helix" evidence="57">
    <location>
        <begin position="347"/>
        <end position="350"/>
    </location>
</feature>
<keyword id="KW-0002">3D-structure</keyword>
<keyword id="KW-0025">Alternative splicing</keyword>
<keyword id="KW-0067">ATP-binding</keyword>
<keyword id="KW-0219">Diabetes mellitus</keyword>
<keyword id="KW-0225">Disease variant</keyword>
<keyword id="KW-1015">Disulfide bond</keyword>
<keyword id="KW-0407">Ion channel</keyword>
<keyword id="KW-0406">Ion transport</keyword>
<keyword id="KW-0472">Membrane</keyword>
<keyword id="KW-0479">Metal-binding</keyword>
<keyword id="KW-0547">Nucleotide-binding</keyword>
<keyword id="KW-0597">Phosphoprotein</keyword>
<keyword id="KW-0630">Potassium</keyword>
<keyword id="KW-0633">Potassium transport</keyword>
<keyword id="KW-1267">Proteomics identification</keyword>
<keyword id="KW-1185">Reference proteome</keyword>
<keyword id="KW-0812">Transmembrane</keyword>
<keyword id="KW-1133">Transmembrane helix</keyword>
<keyword id="KW-0813">Transport</keyword>
<keyword id="KW-0851">Voltage-gated channel</keyword>
<organism>
    <name type="scientific">Homo sapiens</name>
    <name type="common">Human</name>
    <dbReference type="NCBI Taxonomy" id="9606"/>
    <lineage>
        <taxon>Eukaryota</taxon>
        <taxon>Metazoa</taxon>
        <taxon>Chordata</taxon>
        <taxon>Craniata</taxon>
        <taxon>Vertebrata</taxon>
        <taxon>Euteleostomi</taxon>
        <taxon>Mammalia</taxon>
        <taxon>Eutheria</taxon>
        <taxon>Euarchontoglires</taxon>
        <taxon>Primates</taxon>
        <taxon>Haplorrhini</taxon>
        <taxon>Catarrhini</taxon>
        <taxon>Hominidae</taxon>
        <taxon>Homo</taxon>
    </lineage>
</organism>
<reference key="1">
    <citation type="journal article" date="1995" name="Science">
        <title>Reconstitution of IKATP: an inward rectifier subunit plus the sulfonylurea receptor.</title>
        <authorList>
            <person name="Inagaki N."/>
            <person name="Gonoi T."/>
            <person name="Clement J.P. IV"/>
            <person name="Namba N."/>
            <person name="Inazawa J."/>
            <person name="Gonzalez G."/>
            <person name="Aguilar-Bryan L."/>
            <person name="Seino S."/>
            <person name="Bryan J."/>
        </authorList>
    </citation>
    <scope>NUCLEOTIDE SEQUENCE [GENOMIC DNA]</scope>
    <scope>VARIANTS GLU-23; SER-148 AND ILE-337</scope>
    <source>
        <tissue>Placenta</tissue>
    </source>
</reference>
<reference key="2">
    <citation type="journal article" date="2004" name="Nat. Genet.">
        <title>Complete sequencing and characterization of 21,243 full-length human cDNAs.</title>
        <authorList>
            <person name="Ota T."/>
            <person name="Suzuki Y."/>
            <person name="Nishikawa T."/>
            <person name="Otsuki T."/>
            <person name="Sugiyama T."/>
            <person name="Irie R."/>
            <person name="Wakamatsu A."/>
            <person name="Hayashi K."/>
            <person name="Sato H."/>
            <person name="Nagai K."/>
            <person name="Kimura K."/>
            <person name="Makita H."/>
            <person name="Sekine M."/>
            <person name="Obayashi M."/>
            <person name="Nishi T."/>
            <person name="Shibahara T."/>
            <person name="Tanaka T."/>
            <person name="Ishii S."/>
            <person name="Yamamoto J."/>
            <person name="Saito K."/>
            <person name="Kawai Y."/>
            <person name="Isono Y."/>
            <person name="Nakamura Y."/>
            <person name="Nagahari K."/>
            <person name="Murakami K."/>
            <person name="Yasuda T."/>
            <person name="Iwayanagi T."/>
            <person name="Wagatsuma M."/>
            <person name="Shiratori A."/>
            <person name="Sudo H."/>
            <person name="Hosoiri T."/>
            <person name="Kaku Y."/>
            <person name="Kodaira H."/>
            <person name="Kondo H."/>
            <person name="Sugawara M."/>
            <person name="Takahashi M."/>
            <person name="Kanda K."/>
            <person name="Yokoi T."/>
            <person name="Furuya T."/>
            <person name="Kikkawa E."/>
            <person name="Omura Y."/>
            <person name="Abe K."/>
            <person name="Kamihara K."/>
            <person name="Katsuta N."/>
            <person name="Sato K."/>
            <person name="Tanikawa M."/>
            <person name="Yamazaki M."/>
            <person name="Ninomiya K."/>
            <person name="Ishibashi T."/>
            <person name="Yamashita H."/>
            <person name="Murakawa K."/>
            <person name="Fujimori K."/>
            <person name="Tanai H."/>
            <person name="Kimata M."/>
            <person name="Watanabe M."/>
            <person name="Hiraoka S."/>
            <person name="Chiba Y."/>
            <person name="Ishida S."/>
            <person name="Ono Y."/>
            <person name="Takiguchi S."/>
            <person name="Watanabe S."/>
            <person name="Yosida M."/>
            <person name="Hotuta T."/>
            <person name="Kusano J."/>
            <person name="Kanehori K."/>
            <person name="Takahashi-Fujii A."/>
            <person name="Hara H."/>
            <person name="Tanase T.-O."/>
            <person name="Nomura Y."/>
            <person name="Togiya S."/>
            <person name="Komai F."/>
            <person name="Hara R."/>
            <person name="Takeuchi K."/>
            <person name="Arita M."/>
            <person name="Imose N."/>
            <person name="Musashino K."/>
            <person name="Yuuki H."/>
            <person name="Oshima A."/>
            <person name="Sasaki N."/>
            <person name="Aotsuka S."/>
            <person name="Yoshikawa Y."/>
            <person name="Matsunawa H."/>
            <person name="Ichihara T."/>
            <person name="Shiohata N."/>
            <person name="Sano S."/>
            <person name="Moriya S."/>
            <person name="Momiyama H."/>
            <person name="Satoh N."/>
            <person name="Takami S."/>
            <person name="Terashima Y."/>
            <person name="Suzuki O."/>
            <person name="Nakagawa S."/>
            <person name="Senoh A."/>
            <person name="Mizoguchi H."/>
            <person name="Goto Y."/>
            <person name="Shimizu F."/>
            <person name="Wakebe H."/>
            <person name="Hishigaki H."/>
            <person name="Watanabe T."/>
            <person name="Sugiyama A."/>
            <person name="Takemoto M."/>
            <person name="Kawakami B."/>
            <person name="Yamazaki M."/>
            <person name="Watanabe K."/>
            <person name="Kumagai A."/>
            <person name="Itakura S."/>
            <person name="Fukuzumi Y."/>
            <person name="Fujimori Y."/>
            <person name="Komiyama M."/>
            <person name="Tashiro H."/>
            <person name="Tanigami A."/>
            <person name="Fujiwara T."/>
            <person name="Ono T."/>
            <person name="Yamada K."/>
            <person name="Fujii Y."/>
            <person name="Ozaki K."/>
            <person name="Hirao M."/>
            <person name="Ohmori Y."/>
            <person name="Kawabata A."/>
            <person name="Hikiji T."/>
            <person name="Kobatake N."/>
            <person name="Inagaki H."/>
            <person name="Ikema Y."/>
            <person name="Okamoto S."/>
            <person name="Okitani R."/>
            <person name="Kawakami T."/>
            <person name="Noguchi S."/>
            <person name="Itoh T."/>
            <person name="Shigeta K."/>
            <person name="Senba T."/>
            <person name="Matsumura K."/>
            <person name="Nakajima Y."/>
            <person name="Mizuno T."/>
            <person name="Morinaga M."/>
            <person name="Sasaki M."/>
            <person name="Togashi T."/>
            <person name="Oyama M."/>
            <person name="Hata H."/>
            <person name="Watanabe M."/>
            <person name="Komatsu T."/>
            <person name="Mizushima-Sugano J."/>
            <person name="Satoh T."/>
            <person name="Shirai Y."/>
            <person name="Takahashi Y."/>
            <person name="Nakagawa K."/>
            <person name="Okumura K."/>
            <person name="Nagase T."/>
            <person name="Nomura N."/>
            <person name="Kikuchi H."/>
            <person name="Masuho Y."/>
            <person name="Yamashita R."/>
            <person name="Nakai K."/>
            <person name="Yada T."/>
            <person name="Nakamura Y."/>
            <person name="Ohara O."/>
            <person name="Isogai T."/>
            <person name="Sugano S."/>
        </authorList>
    </citation>
    <scope>NUCLEOTIDE SEQUENCE [LARGE SCALE MRNA] (ISOFORM 2)</scope>
    <scope>VARIANT ILE-337</scope>
    <source>
        <tissue>Mammary gland</tissue>
    </source>
</reference>
<reference key="3">
    <citation type="journal article" date="2006" name="Nature">
        <title>Human chromosome 11 DNA sequence and analysis including novel gene identification.</title>
        <authorList>
            <person name="Taylor T.D."/>
            <person name="Noguchi H."/>
            <person name="Totoki Y."/>
            <person name="Toyoda A."/>
            <person name="Kuroki Y."/>
            <person name="Dewar K."/>
            <person name="Lloyd C."/>
            <person name="Itoh T."/>
            <person name="Takeda T."/>
            <person name="Kim D.-W."/>
            <person name="She X."/>
            <person name="Barlow K.F."/>
            <person name="Bloom T."/>
            <person name="Bruford E."/>
            <person name="Chang J.L."/>
            <person name="Cuomo C.A."/>
            <person name="Eichler E."/>
            <person name="FitzGerald M.G."/>
            <person name="Jaffe D.B."/>
            <person name="LaButti K."/>
            <person name="Nicol R."/>
            <person name="Park H.-S."/>
            <person name="Seaman C."/>
            <person name="Sougnez C."/>
            <person name="Yang X."/>
            <person name="Zimmer A.R."/>
            <person name="Zody M.C."/>
            <person name="Birren B.W."/>
            <person name="Nusbaum C."/>
            <person name="Fujiyama A."/>
            <person name="Hattori M."/>
            <person name="Rogers J."/>
            <person name="Lander E.S."/>
            <person name="Sakaki Y."/>
        </authorList>
    </citation>
    <scope>NUCLEOTIDE SEQUENCE [LARGE SCALE GENOMIC DNA]</scope>
</reference>
<reference key="4">
    <citation type="journal article" date="2004" name="Genome Res.">
        <title>The status, quality, and expansion of the NIH full-length cDNA project: the Mammalian Gene Collection (MGC).</title>
        <authorList>
            <consortium name="The MGC Project Team"/>
        </authorList>
    </citation>
    <scope>NUCLEOTIDE SEQUENCE [LARGE SCALE MRNA] (ISOFORMS 1 AND 2)</scope>
    <scope>VARIANTS GLU-23 AND ILE-337</scope>
    <source>
        <tissue>Ovary</tissue>
        <tissue>Spleen</tissue>
    </source>
</reference>
<reference key="5">
    <citation type="journal article" date="1998" name="Circ. Res.">
        <title>Reconstituted human cardiac KATP channels: functional identity with the native channels from the sarcolemma of human ventricular cells.</title>
        <authorList>
            <person name="Babenko A.P."/>
            <person name="Gonzalez G."/>
            <person name="Aguilar-Bryan L."/>
            <person name="Bryan J."/>
        </authorList>
    </citation>
    <scope>FUNCTION</scope>
    <scope>TRANSPORTER ACTIVITY</scope>
    <scope>INTERACTION WITH ABCC9</scope>
</reference>
<reference key="6">
    <citation type="journal article" date="2003" name="Biophys. J.">
        <title>Molecular basis for Kir6.2 channel inhibition by adenine nucleotides.</title>
        <authorList>
            <person name="Ribalet B."/>
            <person name="John S.A."/>
            <person name="Weiss J.N."/>
        </authorList>
    </citation>
    <scope>MOLECULAR BASIS OF ATP SENSITIVITY</scope>
</reference>
<reference evidence="49 50" key="7">
    <citation type="journal article" date="2017" name="Elife">
        <title>Molecular structure of human KATP in complex with ATP and ADP.</title>
        <authorList>
            <person name="Lee K.P.K."/>
            <person name="Chen J."/>
            <person name="MacKinnon R."/>
        </authorList>
    </citation>
    <scope>STRUCTURE BY ELECTRON MICROSCOPY (3.90 ANGSTROMS)IN COMPLEX WITH ATP AND K(+)</scope>
    <scope>FUNCTION</scope>
    <scope>ACTIVITY REGULATION</scope>
    <scope>SUBUNIT</scope>
    <scope>DISULFIDE BONDS</scope>
</reference>
<reference evidence="51 52 53 54 55 56" key="8">
    <citation type="journal article" date="2021" name="Proc. Natl. Acad. Sci. U.S.A.">
        <title>Molecular structure of an open human KATP channel.</title>
        <authorList>
            <person name="Zhao C."/>
            <person name="MacKinnon R."/>
        </authorList>
    </citation>
    <scope>STRUCTURE BY ELECTRON MICROSCOPY (3.10 ANGSTROMS) OF OPEN CHANNEL</scope>
    <scope>TOPOLOGY</scope>
    <scope>MUTAGENESIS OF CYS-166 AND GLY-334</scope>
    <scope>DISULFIDE BONDS</scope>
    <scope>SUBUNIT</scope>
    <scope>TRANSPORTER ACTIVITY</scope>
    <scope>ACTIVITY REGULATION</scope>
    <scope>FUNCTION</scope>
</reference>
<reference key="9">
    <citation type="journal article" date="2007" name="Neurology">
        <title>A novel mutation causing DEND syndrome: a treatable channelopathy of pancreas and brain.</title>
        <authorList>
            <person name="Shimomura K."/>
            <person name="Horster F."/>
            <person name="de Wet H."/>
            <person name="Flanagan S.E."/>
            <person name="Ellard S."/>
            <person name="Hattersley A.T."/>
            <person name="Wolf N.I."/>
            <person name="Ashcroft F."/>
            <person name="Ebinger F."/>
        </authorList>
    </citation>
    <scope>INVOLVEMENT IN PNDM2</scope>
    <scope>VARIANT PNDM2 LEU-167</scope>
    <scope>CHARACTERIZATION OF VARIANT PNDM2 LEU-167</scope>
</reference>
<reference key="10">
    <citation type="journal article" date="2008" name="J. Clin. Invest.">
        <title>Clinical characteristics and biochemical mechanisms of congenital hyperinsulinism associated with dominant KATP channel mutations.</title>
        <authorList>
            <person name="Pinney S.E."/>
            <person name="MacMullen C."/>
            <person name="Becker S."/>
            <person name="Lin Y.W."/>
            <person name="Hanna C."/>
            <person name="Thornton P."/>
            <person name="Ganguly A."/>
            <person name="Shyng S.L."/>
            <person name="Stanley C.A."/>
        </authorList>
    </citation>
    <scope>INVOLVEMENT IN HHF2</scope>
    <scope>VARIANTS HHF2 LEU-55; ARG-156 AND GLU-204</scope>
</reference>
<reference key="11">
    <citation type="journal article" date="2009" name="Hum. Mol. Genet.">
        <title>Sar1-GTPase-dependent ER exit of KATP channels revealed by a mutation causing congenital hyperinsulinism.</title>
        <authorList>
            <person name="Taneja T.K."/>
            <person name="Mankouri J."/>
            <person name="Karnik R."/>
            <person name="Kannan S."/>
            <person name="Smith A.J."/>
            <person name="Munsey T."/>
            <person name="Christesen H.B."/>
            <person name="Beech D.J."/>
            <person name="Sivaprasadarao A."/>
        </authorList>
    </citation>
    <scope>INVOLVEMENT IN HHF2</scope>
    <scope>VARIANT HHF2 LYS-282</scope>
    <scope>CHARACTERIZATION OF VARIANT HHF2 LYS-282</scope>
</reference>
<reference key="12">
    <citation type="journal article" date="2010" name="Hum. Mol. Genet.">
        <title>Interaction between mutations in the slide helix of Kir6.2 associated with neonatal diabetes and neurological symptoms.</title>
        <authorList>
            <person name="Maennikkoe R."/>
            <person name="Jefferies C."/>
            <person name="Flanagan S.E."/>
            <person name="Hattersley A."/>
            <person name="Ellard S."/>
            <person name="Ashcroft F.M."/>
        </authorList>
    </citation>
    <scope>INVOLVEMENT IN PNDM2</scope>
    <scope>VARIANTS PNDM2 TYR-60 AND LEU-64</scope>
    <scope>CHARACTERIZATION OF VARIANTS PNDM2 TYR-60 AND LEU-64</scope>
</reference>
<reference key="13">
    <citation type="journal article" date="1999" name="Hum. Mutat.">
        <title>Congenital hyperinsulinism: molecular basis of a heterogeneous disease.</title>
        <authorList>
            <person name="Meissner T."/>
            <person name="Beinbrech B."/>
            <person name="Mayatepek E."/>
        </authorList>
    </citation>
    <scope>REVIEW ON VARIANTS</scope>
</reference>
<reference key="14">
    <citation type="journal article" date="2007" name="J. Physiol. (Lond.)">
        <title>A mutation in the ATP-binding site of the Kir6.2 subunit of the KATP channel alters coupling with the SUR2A subunit.</title>
        <authorList>
            <person name="Tammaro P."/>
            <person name="Ashcroft F.M."/>
        </authorList>
    </citation>
    <scope>FUNCTION</scope>
    <scope>CHARACTERIZATION OF VARIANT PNDM2 ILE-333</scope>
    <scope>INTERACTION WITH ABCC9</scope>
</reference>
<reference key="15">
    <citation type="journal article" date="2008" name="Neuroscience">
        <title>Functional modulation of the ATP-sensitive potassium channel by extracellular signal-regulated kinase-mediated phosphorylation.</title>
        <authorList>
            <person name="Lin Y.F."/>
            <person name="Chai Y."/>
        </authorList>
    </citation>
    <scope>PHOSPHORYLATION AT THR-341 AND SER-385</scope>
</reference>
<reference key="16">
    <citation type="journal article" date="2012" name="PLoS ONE">
        <title>Whole-exome sequencing and high throughput genotyping identified KCNJ11 as the thirteenth MODY gene.</title>
        <authorList>
            <person name="Bonnefond A."/>
            <person name="Philippe J."/>
            <person name="Durand E."/>
            <person name="Dechaume A."/>
            <person name="Huyvaert M."/>
            <person name="Montagne L."/>
            <person name="Marre M."/>
            <person name="Balkau B."/>
            <person name="Fajardy I."/>
            <person name="Vambergue A."/>
            <person name="Vatin V."/>
            <person name="Delplanque J."/>
            <person name="Le Guilcher D."/>
            <person name="De Graeve F."/>
            <person name="Lecoeur C."/>
            <person name="Sand O."/>
            <person name="Vaxillaire M."/>
            <person name="Froguel P."/>
        </authorList>
    </citation>
    <scope>INVOLVEMENT IN MODY13</scope>
    <scope>VARIANT MODY13 LYS-227</scope>
</reference>
<reference key="17">
    <citation type="journal article" date="2017" name="J. Biol. Chem.">
        <title>Conserved functional consequences of disease-associated mutations in the slide-helix of Kir6.1 and Kir6.2 subunits of the ATP-sensitive potassium channel.</title>
        <authorList>
            <person name="Cooper P.E."/>
            <person name="McClenaghan C."/>
            <person name="Chen X."/>
            <person name="Stary-Weinzinger A."/>
            <person name="Nichols C.G."/>
        </authorList>
    </citation>
    <scope>FUNCTION</scope>
    <scope>CHARACTERIZATION OF VARIANT PNDM2 LEU-64</scope>
    <scope>MUTAGENESIS OF VAL-64</scope>
</reference>
<reference key="18">
    <citation type="journal article" date="1995" name="Am. J. Hum. Genet.">
        <title>Homozygosity mapping, to chromosome 11p, of the gene for familial persistent hyperinsulinemic hypoglycemia of infancy.</title>
        <authorList>
            <person name="Thomas P.M."/>
            <person name="Cote G.J."/>
            <person name="Hallman D.M."/>
            <person name="Mathew P.M."/>
        </authorList>
    </citation>
    <scope>VARIANT HHF2 PRO-147</scope>
</reference>
<reference key="19">
    <citation type="journal article" date="1996" name="Hum. Mol. Genet.">
        <title>Mutation of the pancreatic islet inward rectifier Kir6.2 also leads to familial persistent hyperinsulinemic hypoglycemia of infancy.</title>
        <authorList>
            <person name="Thomas P."/>
            <person name="Ye Y."/>
            <person name="Lightner E."/>
        </authorList>
    </citation>
    <scope>VARIANT HHF2 PRO-147</scope>
</reference>
<reference key="20">
    <citation type="journal article" date="1996" name="Diabetologia">
        <title>Sequence variations in the human Kir6.2 gene, a subunit of the beta-cell ATP-sensitive K-channel: no association with NIDDM in white Caucasian subjects or evidence of abnormal function when expressed in vitro.</title>
        <authorList>
            <person name="Sakura H."/>
            <person name="Wat N."/>
            <person name="Horton V."/>
            <person name="Millns H."/>
            <person name="Turner R.C."/>
            <person name="Ashcroft F.M."/>
        </authorList>
    </citation>
    <scope>VARIANTS NIDDM PRO-355 AND LYS-PRO-380 INS</scope>
    <scope>VARIANTS GLU-23; VAL-270; ILE-337 AND CYS-385</scope>
</reference>
<reference key="21">
    <citation type="journal article" date="1997" name="Diabetes">
        <title>Sequence variants in the pancreatic islet beta-cell inwardly rectifying K+ channel Kir6.2 (Bir) gene: identification and lack of role in Caucasian patients with NIDDM.</title>
        <authorList>
            <person name="Inoue H."/>
            <person name="Ferrer J."/>
            <person name="Warren-Perry M."/>
            <person name="Zhang Y."/>
            <person name="Millns H."/>
            <person name="Turner R.C."/>
            <person name="Elbein S.C."/>
            <person name="Hampe C.L."/>
            <person name="Suarez B.K."/>
            <person name="Inagaki N."/>
            <person name="Seino S."/>
            <person name="Permutt M.A."/>
        </authorList>
    </citation>
    <scope>VARIANTS LYS-10; GLU-23; VAL-270 AND ILE-337</scope>
</reference>
<reference key="22">
    <citation type="journal article" date="1999" name="Endocr. Rev.">
        <title>Molecular biology of adenosine triphosphate-sensitive potassium channels.</title>
        <authorList>
            <person name="Aguilar-Bryan L."/>
            <person name="Bryan J."/>
        </authorList>
    </citation>
    <scope>VARIANT HHF2 ARG-91</scope>
</reference>
<reference key="23">
    <citation type="journal article" date="1999" name="Nat. Genet.">
        <title>Patterns of single-nucleotide polymorphisms in candidate genes for blood-pressure homeostasis.</title>
        <authorList>
            <person name="Halushka M.K."/>
            <person name="Fan J.-B."/>
            <person name="Bentley K."/>
            <person name="Hsie L."/>
            <person name="Shen N."/>
            <person name="Weder A."/>
            <person name="Cooper R."/>
            <person name="Lipshutz R."/>
            <person name="Chakravarti A."/>
        </authorList>
    </citation>
    <scope>VARIANTS GLU-23 AND ILE-337</scope>
</reference>
<reference key="24">
    <citation type="journal article" date="2002" name="J. Clin. Endocrinol. Metab.">
        <title>Acute insulin response tests for the differential diagnosis of congenital hyperinsulinism.</title>
        <authorList>
            <person name="Huopio H."/>
            <person name="Jaeaeskelaeinen J."/>
            <person name="Komulainen J."/>
            <person name="Miettinen R."/>
            <person name="Kaerkkaeinen P."/>
            <person name="Laakso M."/>
            <person name="Tapanainen P."/>
            <person name="Voutilainen R."/>
            <person name="Otonkoski T."/>
        </authorList>
    </citation>
    <scope>VARIANT HHF2 ASN-67</scope>
</reference>
<reference key="25">
    <citation type="journal article" date="2004" name="Diabetes">
        <title>Permanent neonatal diabetes due to mutations in KCNJ11 encoding Kir6.2: patient characteristics and initial response to sulfonylurea therapy.</title>
        <authorList>
            <person name="Sagen J.V."/>
            <person name="Raeder H."/>
            <person name="Hathout E."/>
            <person name="Shehadeh N."/>
            <person name="Gudmundsson K."/>
            <person name="Baevre H."/>
            <person name="Abuelo D."/>
            <person name="Phornphutkul C."/>
            <person name="Molnes J."/>
            <person name="Bell G.I."/>
            <person name="Gloyn A.L."/>
            <person name="Hattersley A.T."/>
            <person name="Molven A."/>
            <person name="Soevik O."/>
            <person name="Njoelstad P.R."/>
        </authorList>
    </citation>
    <scope>VARIANTS PNDM2 VAL-35; MET-59; HIS-201; CYS-330 AND ILE-333</scope>
</reference>
<reference key="26">
    <citation type="journal article" date="2004" name="Diabetes">
        <title>Kir6.2 mutations are a common cause of permanent neonatal diabetes in a large cohort of French patients.</title>
        <authorList>
            <person name="Vaxillaire M."/>
            <person name="Populaire C."/>
            <person name="Busiah K."/>
            <person name="Cave H."/>
            <person name="Gloyn A.L."/>
            <person name="Hattersley A.T."/>
            <person name="Czernichow P."/>
            <person name="Froguel P."/>
            <person name="Polak M."/>
        </authorList>
    </citation>
    <scope>VARIANTS PNDM2 LEU-35; MET-59; CYS-201; HIS-201; LYS-322 AND CYS-330</scope>
</reference>
<reference key="27">
    <citation type="journal article" date="2004" name="J. Clin. Endocrinol. Metab.">
        <title>Permanent neonatal diabetes due to paternal germline mosaicism for an activating mutation of the KCNJ11 gene encoding the Kir6.2 subunit of the beta-cell potassium adenosine triphosphate channel.</title>
        <authorList>
            <person name="Gloyn A.L."/>
            <person name="Cummings E.A."/>
            <person name="Edghill E.L."/>
            <person name="Harries L.W."/>
            <person name="Scott R."/>
            <person name="Costa T."/>
            <person name="Temple I.K."/>
            <person name="Hattersley A.T."/>
            <person name="Ellard S."/>
        </authorList>
    </citation>
    <scope>VARIANT PNDM2 CYS-201</scope>
</reference>
<reference key="28">
    <citation type="journal article" date="2004" name="J. Clin. Endocrinol. Metab.">
        <title>Hyperinsulinism of infancy: novel ABCC8 and KCNJ11 mutations and evidence for additional locus heterogeneity.</title>
        <authorList>
            <person name="Tornovsky S."/>
            <person name="Crane A."/>
            <person name="Cosgrove K.E."/>
            <person name="Hussain K."/>
            <person name="Lavie J."/>
            <person name="Heyman M."/>
            <person name="Nesher Y."/>
            <person name="Kuchinski N."/>
            <person name="Ben-Shushan E."/>
            <person name="Shatz O."/>
            <person name="Nahari E."/>
            <person name="Potikha T."/>
            <person name="Zangen D."/>
            <person name="Tenenbaum-Rakover Y."/>
            <person name="de Vries L."/>
            <person name="Argente J."/>
            <person name="Gracia R."/>
            <person name="Landau H."/>
            <person name="Eliakim A."/>
            <person name="Lindley K."/>
            <person name="Dunne M.J."/>
            <person name="Aguilar-Bryan L."/>
            <person name="Glaser B."/>
        </authorList>
    </citation>
    <scope>VARIANT HHF2 LEU-254</scope>
    <scope>CHARACTERIZATION OF VARIANT HHF2 LEU-254</scope>
</reference>
<reference key="29">
    <citation type="journal article" date="2004" name="N. Engl. J. Med.">
        <title>Activating mutations in the gene encoding the ATP-sensitive potassium-channel subunit Kir6.2 and permanent neonatal diabetes.</title>
        <authorList>
            <person name="Gloyn A.L."/>
            <person name="Pearson E.R."/>
            <person name="Antcliff J.F."/>
            <person name="Proks P."/>
            <person name="Bruining G.J."/>
            <person name="Slingerland A.S."/>
            <person name="Howard N."/>
            <person name="Srinivasan S."/>
            <person name="Silva J.M.C.L."/>
            <person name="Molnes J."/>
            <person name="Edghill E.L."/>
            <person name="Frayling T.M."/>
            <person name="Temple I.K."/>
            <person name="Mackay D."/>
            <person name="Shield J.P.H."/>
            <person name="Sumnik Z."/>
            <person name="van Rhijn A."/>
            <person name="Wales J.K.H."/>
            <person name="Clark P."/>
            <person name="Gorman S."/>
            <person name="Aisenberg J."/>
            <person name="Ellard S."/>
            <person name="Njoelstad P.R."/>
            <person name="Ashcroft F.M."/>
            <person name="Hattersley A.T."/>
        </authorList>
    </citation>
    <scope>VARIANTS PNDM2 ARG-52; GLY-59; MET-59; HIS-201; CYS-201 AND LEU-296</scope>
    <scope>CHARACTERIZATION OF VARIANT PNDM2 HIS-201</scope>
</reference>
<reference key="30">
    <citation type="journal article" date="2004" name="N. Engl. J. Med.">
        <authorList>
            <person name="Gloyn A.L."/>
            <person name="Pearson E.R."/>
            <person name="Antcliff J.F."/>
            <person name="Proks P."/>
            <person name="Bruining G.J."/>
            <person name="Slingerland A.S."/>
            <person name="Howard N."/>
            <person name="Srinivasan S."/>
            <person name="Silva J.M.C.L."/>
            <person name="Molnes J."/>
            <person name="Edghill E.L."/>
            <person name="Frayling T.M."/>
            <person name="Temple I.K."/>
            <person name="Mackay D."/>
            <person name="Shield J.P.H."/>
            <person name="Sumnik Z."/>
            <person name="van Rhijn A."/>
            <person name="Wales J.K.H."/>
            <person name="Clark P."/>
            <person name="Gorman S."/>
            <person name="Aisenberg J."/>
            <person name="Ellard S."/>
            <person name="Njoelstad P.R."/>
            <person name="Ashcroft F.M."/>
            <person name="Hattersley A.T."/>
        </authorList>
    </citation>
    <scope>ERRATUM OF PUBMED:15115830</scope>
</reference>
<reference key="31">
    <citation type="journal article" date="2004" name="Proc. Natl. Acad. Sci. U.S.A.">
        <title>Molecular basis of Kir6.2 mutations associated with neonatal diabetes or neonatal diabetes plus neurological features.</title>
        <authorList>
            <person name="Proks P."/>
            <person name="Antcliff J.F."/>
            <person name="Lippiat J."/>
            <person name="Gloyn A.L."/>
            <person name="Hattersley A.T."/>
            <person name="Ashcroft F.M."/>
        </authorList>
    </citation>
    <scope>CHARACTERIZATION OF VARIANTS PNDM2 ARG-52; GLY-59 AND CYS-201</scope>
</reference>
<reference key="32">
    <citation type="journal article" date="2005" name="Clin. Endocrinol. (Oxf.)">
        <title>Genotypes of the pancreatic beta-cell K-ATP channel and clinical phenotypes of Japanese patients with persistent hyperinsulinaemic hypoglycaemia of infancy.</title>
        <authorList>
            <person name="Ohkubo K."/>
            <person name="Nagashima M."/>
            <person name="Naito Y."/>
            <person name="Taguchi T."/>
            <person name="Suita S."/>
            <person name="Okamoto N."/>
            <person name="Fujinaga H."/>
            <person name="Tsumura K."/>
            <person name="Kikuchi K."/>
            <person name="Ono J."/>
        </authorList>
    </citation>
    <scope>VARIANT HHF2 HIS-34</scope>
    <scope>VARIANTS GLU-23; SER-148 AND ILE-337</scope>
</reference>
<reference key="33">
    <citation type="journal article" date="2005" name="Hum. Mol. Genet.">
        <title>Relapsing diabetes can result from moderately activating mutations in KCNJ11.</title>
        <authorList>
            <person name="Gloyn A.L."/>
            <person name="Reimann F."/>
            <person name="Girard C."/>
            <person name="Edghill E.L."/>
            <person name="Proks P."/>
            <person name="Pearson E.R."/>
            <person name="Temple I.K."/>
            <person name="Mackay D.J.G."/>
            <person name="Shield J.P.H."/>
            <person name="Freedenberg D."/>
            <person name="Noyes K."/>
            <person name="Ellard S."/>
            <person name="Ashcroft F.M."/>
            <person name="Gribble F.M."/>
            <person name="Hattersley A.T."/>
        </authorList>
    </citation>
    <scope>VARIANTS TNDM3 SER-53; ARG-53 AND VAL-182</scope>
    <scope>CHARACTERIZATION OF VARIANTS TNDM3 SER-53; ARG-53 AND VAL-182</scope>
</reference>
<reference key="34">
    <citation type="journal article" date="2005" name="Hum. Mutat.">
        <title>KCNJ11 activating mutations in Italian patients with permanent neonatal diabetes.</title>
        <authorList>
            <consortium name="The early onset diabetes study group of the Italian society of pediatric endocrinology and diabetes"/>
            <person name="Massa O."/>
            <person name="Iafusco D."/>
            <person name="D'Amato E."/>
            <person name="Gloyn A.L."/>
            <person name="Hattersley A.T."/>
            <person name="Pasquino B."/>
            <person name="Tonini G."/>
            <person name="Dammacco F."/>
            <person name="Zanette G."/>
            <person name="Meschi F."/>
            <person name="Porzio O."/>
            <person name="Bottazzo G."/>
            <person name="Crino A."/>
            <person name="Lorini R."/>
            <person name="Cerutti F."/>
            <person name="Vanelli M."/>
            <person name="Barbetti F."/>
        </authorList>
    </citation>
    <scope>VARIANTS PNDM2 PRO-50; MET-59; ARG-170; ASN-170 AND CYS-201</scope>
</reference>
<reference key="35">
    <citation type="journal article" date="2005" name="J. Clin. Endocrinol. Metab.">
        <title>Genotype-phenotype correlations in children with congenital hyperinsulinism due to recessive mutations of the adenosine triphosphate-sensitive potassium channel genes.</title>
        <authorList>
            <person name="Henwood M.J."/>
            <person name="Kelly A."/>
            <person name="MacMullen C."/>
            <person name="Bhatia P."/>
            <person name="Ganguly A."/>
            <person name="Thornton P.S."/>
            <person name="Stanley C.A."/>
        </authorList>
    </citation>
    <scope>VARIANTS HHF2 ASP-101; ALA-134; LEU-136; LEU-266 AND HIS-301</scope>
</reference>
<reference key="36">
    <citation type="journal article" date="2005" name="J. Clin. Endocrinol. Metab.">
        <title>The C42R mutation in the Kir6.2 (KCNJ11) gene as a cause of transient neonatal diabetes, childhood diabetes, or later-onset, apparently type 2 diabetes mellitus.</title>
        <authorList>
            <person name="Yorifuji T."/>
            <person name="Nagashima K."/>
            <person name="Kurokawa K."/>
            <person name="Kawai M."/>
            <person name="Oishi M."/>
            <person name="Akazawa Y."/>
            <person name="Hosokawa M."/>
            <person name="Yamada Y."/>
            <person name="Inagaki N."/>
            <person name="Nakahata T."/>
        </authorList>
    </citation>
    <scope>VARIANT TNDM3 ARG-42</scope>
    <scope>CHARACTERIZATION OF VARIANT TNDM3 ARG-42</scope>
</reference>
<reference key="37">
    <citation type="journal article" date="2005" name="J. Clin. Endocrinol. Metab.">
        <title>Severe congenital hyperinsulinism caused by a mutation in the Kir6.2 subunit of the adenosine triphosphate-sensitive potassium channel impairing trafficking and function.</title>
        <authorList>
            <person name="Marthinet E."/>
            <person name="Bloc A."/>
            <person name="Oka Y."/>
            <person name="Tanizawa Y."/>
            <person name="Wehrle-Haller B."/>
            <person name="Bancila V."/>
            <person name="Dubuis J.-M."/>
            <person name="Philippe J."/>
            <person name="Schwitzgebel V.M."/>
        </authorList>
    </citation>
    <scope>VARIANT HHF2 ARG-259</scope>
    <scope>CHARACTERIZATION OF VARIANT HHF2 ARG-259</scope>
</reference>
<reference key="38">
    <citation type="journal article" date="2006" name="Diabetes">
        <title>Mutations at the same residue (R50) of Kir6.2 (KCNJ11) that cause neonatal diabetes produce different functional effects.</title>
        <authorList>
            <person name="Shimomura K."/>
            <person name="Girard C.A.J."/>
            <person name="Proks P."/>
            <person name="Nazim J."/>
            <person name="Lippiat J.D."/>
            <person name="Cerutti F."/>
            <person name="Lorini R."/>
            <person name="Ellard S."/>
            <person name="Hattersely A.T."/>
            <person name="Barbetti F."/>
            <person name="Ashcroft F.M."/>
        </authorList>
    </citation>
    <scope>VARIANTS PNDM2 GLN-50 AND PRO-50</scope>
    <scope>CHARACTERIZATION OF VARIANTS PNDM2 GLN-50 AND PRO-50</scope>
</reference>
<reference key="39">
    <citation type="journal article" date="2006" name="Diabetologia">
        <title>Mutations in KCNJ11, which encodes Kir6.2, are a common cause of diabetes diagnosed in the first 6 months of life, with the phenotype determined by genotype.</title>
        <authorList>
            <person name="Flanagan S.E."/>
            <person name="Edghill E.L."/>
            <person name="Gloyn A.L."/>
            <person name="Ellard S."/>
            <person name="Hattersley A.T."/>
        </authorList>
    </citation>
    <scope>VARIANTS PNDM2 TYR-46; GLN-50; ARG-52; ASP-53; GLY-59; MET-59; PRO-164; TYR-166; THR-170; CYS-201; HIS-201; LEU-201; LEU-296 AND SER-330</scope>
</reference>
<reference key="40">
    <citation type="journal article" date="2006" name="Hum. Mutat.">
        <title>Mutation spectra of ABCC8 gene in Spanish patients with Hyperinsulinism of Infancy (HI).</title>
        <authorList>
            <person name="Fernandez-Marmiesse A."/>
            <person name="Salas A."/>
            <person name="Vega A."/>
            <person name="Fernandez-Lorenzo J.R."/>
            <person name="Barreiro J."/>
            <person name="Carracedo A."/>
        </authorList>
    </citation>
    <scope>VARIANTS GLU-23 AND ILE-337</scope>
</reference>
<reference key="41">
    <citation type="journal article" date="2006" name="J. Biol. Chem.">
        <title>A novel KCNJ11 mutation associated with congenital hyperinsulinism reduces the intrinsic open probability of beta-cell ATP-sensitive potassium channels.</title>
        <authorList>
            <person name="Lin Y.-W."/>
            <person name="MacMullen C."/>
            <person name="Ganguly A."/>
            <person name="Stanley C.A."/>
            <person name="Shyng S.-L."/>
        </authorList>
    </citation>
    <scope>VARIANT HHF2 LEU-55</scope>
    <scope>CHARACTERIZATION OF VARIANT HHF2 LEU-55</scope>
</reference>
<reference key="42">
    <citation type="journal article" date="2006" name="Mod. Pathol.">
        <title>Molecular and immunohistochemical analyses of the focal form of congenital hyperinsulinism.</title>
        <authorList>
            <person name="Suchi M."/>
            <person name="MacMullen C.M."/>
            <person name="Thornton P.S."/>
            <person name="Adzick N.S."/>
            <person name="Ganguly A."/>
            <person name="Ruchelli E.D."/>
            <person name="Stanley C.A."/>
        </authorList>
    </citation>
    <scope>VARIANTS HHF2 ASP-40; ASP-101; PRO-116; LEU-136 AND HIS-301</scope>
</reference>
<reference key="43">
    <citation type="journal article" date="2007" name="J. Clin. Endocrinol. Metab.">
        <title>Prevalence of permanent neonatal diabetes in Slovakia and successful replacement of insulin with sulfonylurea therapy in KCNJ11 and ABCC8 mutation carriers.</title>
        <authorList>
            <person name="Stanik J."/>
            <person name="Gasperikova D."/>
            <person name="Paskova M."/>
            <person name="Barak L."/>
            <person name="Javorkova J."/>
            <person name="Jancova E."/>
            <person name="Ciljakova M."/>
            <person name="Hlava P."/>
            <person name="Michalek J."/>
            <person name="Flanagan S.E."/>
            <person name="Pearson E."/>
            <person name="Hattersley A.T."/>
            <person name="Ellard S."/>
            <person name="Klimes I."/>
        </authorList>
    </citation>
    <scope>VARIANTS PNDM2 TYR-46; PRO-164 AND HIS-201</scope>
</reference>
<reference key="44">
    <citation type="journal article" date="2024" name="Diabetologia">
        <title>A loss-of-function mutation in KCNJ11 causing sulfonylurea-sensitive diabetes in early adult life.</title>
        <authorList>
            <person name="Vedovato N."/>
            <person name="Salguero M.V."/>
            <person name="Greeley S.A.W."/>
            <person name="Yu C.H."/>
            <person name="Philipson L.H."/>
            <person name="Ashcroft F.M."/>
        </authorList>
    </citation>
    <scope>VARIANT LEU-118</scope>
    <scope>CHARACTERIZATION OF VARIANT LEU-118</scope>
</reference>
<proteinExistence type="evidence at protein level"/>
<protein>
    <recommendedName>
        <fullName>ATP-sensitive inward rectifier potassium channel 11</fullName>
    </recommendedName>
    <alternativeName>
        <fullName evidence="45">IKATP</fullName>
    </alternativeName>
    <alternativeName>
        <fullName evidence="46">Inward rectifier K(+) channel Kir6.2</fullName>
    </alternativeName>
    <alternativeName>
        <fullName>Potassium channel, inwardly rectifying subfamily J member 11</fullName>
    </alternativeName>
</protein>
<comment type="function">
    <text evidence="1 27 33 34 35 42">Inward rectifier potassium channel that forms the pore of ATP-sensitive potassium channels (KATP), regulating potassium permeability as a function of cytoplasmic ATP and ADP concentrations in many different cells (PubMed:29286281, PubMed:34815345). Inward rectifier potassium channels are characterized by a greater tendency to allow potassium to flow into the cell rather than out of it. Their voltage dependence is regulated by the concentration of extracellular potassium; as external potassium is raised, the voltage range of the channel opening shifts to more positive voltages. The inward rectification is mainly due to the blockage of outward current by internal magnesium. Can be blocked by extracellular barium (By similarity). In pancreatic cells, it forms KATP channels with ABCC8/SUR1 (PubMed:29286281, PubMed:34815345). Can form cardiac and smooth muscle-type KATP channels with ABCC9.</text>
</comment>
<comment type="catalytic activity">
    <reaction evidence="35 42">
        <text>K(+)(in) = K(+)(out)</text>
        <dbReference type="Rhea" id="RHEA:29463"/>
        <dbReference type="ChEBI" id="CHEBI:29103"/>
    </reaction>
</comment>
<comment type="activity regulation">
    <text evidence="34 35">KATP channels are regulated by cytoplasmic ATP/ADP ratios; ATP inhibits the channel by closing the pore, while ADP activates the channel (PubMed:29286281, PubMed:34815345). Activated by phosphatidylinositol 4,5-biphosphate (PtdIns(4,5)P2) (PubMed:34815345).</text>
</comment>
<comment type="subunit">
    <text evidence="27 34 35 42">Homotetramer; the homotetramer binds four ATP molecules (one ATP per subunit) (PubMed:29286281, PubMed:34815345). Forms an heterooctamer with ABCC8/SUR1; one KCNJ11 homotetramer interacts with four ABCC8/SUR1 molecules (PubMed:34815345, PubMed:9831708). Interacts with ABCC9/SUR2.</text>
</comment>
<comment type="interaction">
    <interactant intactId="EBI-2866553">
        <id>Q14654</id>
    </interactant>
    <interactant intactId="EBI-15807650">
        <id>Q09428-1</id>
        <label>ABCC8</label>
    </interactant>
    <organismsDiffer>false</organismsDiffer>
    <experiments>2</experiments>
</comment>
<comment type="interaction">
    <interactant intactId="EBI-2866553">
        <id>Q14654</id>
    </interactant>
    <interactant intactId="EBI-941975">
        <id>Q01484</id>
        <label>ANK2</label>
    </interactant>
    <organismsDiffer>false</organismsDiffer>
    <experiments>6</experiments>
</comment>
<comment type="interaction">
    <interactant intactId="EBI-2866553">
        <id>Q14654</id>
    </interactant>
    <interactant intactId="EBI-371922">
        <id>Q96B26</id>
        <label>EXOSC8</label>
    </interactant>
    <organismsDiffer>false</organismsDiffer>
    <experiments>3</experiments>
</comment>
<comment type="subcellular location">
    <subcellularLocation>
        <location>Membrane</location>
        <topology>Multi-pass membrane protein</topology>
    </subcellularLocation>
</comment>
<comment type="alternative products">
    <event type="alternative splicing"/>
    <isoform>
        <id>Q14654-1</id>
        <name>1</name>
        <sequence type="displayed"/>
    </isoform>
    <isoform>
        <id>Q14654-2</id>
        <name>2</name>
        <sequence type="described" ref="VSP_045270"/>
    </isoform>
</comment>
<comment type="domain">
    <text evidence="2">There are two PtdIns(4,5)P2 binding sites: A canonical site where the phosphate groups of one PtdIns(4,5)P2 molecule are coordinated at least by residues Lys-67, Trp-68 and Arg-176; a non-canonical site where the second PtdIns(4,5)P2 molecule is coordinated by both KCNJ11 and ABCC8/SUR1 residues.</text>
</comment>
<comment type="PTM">
    <text evidence="28">Phosphorylation by MAPK1 results in changes in channel gating that destabilize the closed states and reduce the ATP sensitivity.</text>
</comment>
<comment type="disease" evidence="3 5 12 13 18 19 20 21 29 30 38 40">
    <disease id="DI-01580">
        <name>Hyperinsulinemic hypoglycemia, familial, 2</name>
        <acronym>HHF2</acronym>
        <description>A form of hyperinsulinemic hypoglycemia, a clinically and genetically heterogeneous disorder characterized by inappropriate insulin secretion from the pancreatic beta-cells in the presence of low blood glucose levels. HHF2 is a common cause of persistent hypoglycemia in infancy. Unless early and aggressive intervention is undertaken, brain damage from recurrent episodes of hypoglycemia may occur. HHF2 inheritance can be autosomal dominant or autosomal recessive.</description>
        <dbReference type="MIM" id="601820"/>
    </disease>
    <text>The disease is caused by variants affecting the gene represented in this entry.</text>
</comment>
<comment type="disease" evidence="7 8 9 10 14 15 23 24 25 26 27 31 33">
    <disease id="DI-05823">
        <name>Diabetes mellitus, permanent neonatal, 2</name>
        <acronym>PNDM2</acronym>
        <description>A form of permanent neonatal diabetes mellitus, a type of diabetes characterized by onset of persistent hyperglycemia within the first six months of life. Initial clinical manifestations include intrauterine growth retardation, hyperglycemia, glycosuria, osmotic polyuria, severe dehydration, and failure to thrive. Some PNDM2 patients may also have developmental delay, muscle weakness, epilepsy and dysmorphic features. PNDM2 transmission pattern is consistent with autosomal dominant inheritance.</description>
        <dbReference type="MIM" id="618856"/>
    </disease>
    <text>The disease is caused by variants affecting the gene represented in this entry.</text>
</comment>
<comment type="disease" evidence="16 17">
    <disease id="DI-02382">
        <name>Diabetes mellitus, transient neonatal, 3</name>
        <acronym>TNDM3</acronym>
        <description>An autosomal dominant form of diabetes mellitus defined by the onset of insulin-requiring hyperglycemia within the first month of life. In about half of the neonates, diabetes is transient and resolves at a median age of 3 months, whereas the rest have a permanent form of diabetes. TNDM3 onset is variable and onset in the third decade of life has been described in some patients.</description>
        <dbReference type="MIM" id="610582"/>
    </disease>
    <text>The disease is caused by variants affecting the gene represented in this entry.</text>
</comment>
<comment type="disease">
    <text>Defects in KCNJ11 may contribute to non-insulin-dependent diabetes mellitus (NIDDM), also known as diabetes mellitus type 2.</text>
</comment>
<comment type="disease" evidence="32">
    <disease id="DI-04404">
        <name>Maturity-onset diabetes of the young 13</name>
        <acronym>MODY13</acronym>
        <description>A form of diabetes that is characterized by an autosomal dominant mode of inheritance, onset in childhood or early adulthood (usually before 25 years of age), a primary defect in insulin secretion and frequent insulin-independence at the beginning of the disease.</description>
        <dbReference type="MIM" id="616329"/>
    </disease>
    <text>The disease is caused by variants affecting the gene represented in this entry.</text>
</comment>
<comment type="similarity">
    <text evidence="47">Belongs to the inward rectifier-type potassium channel (TC 1.A.2.1) family. KCNJ11 subfamily.</text>
</comment>
<comment type="sequence caution" evidence="47">
    <conflict type="erroneous initiation">
        <sequence resource="EMBL-CDS" id="AAH40617"/>
    </conflict>
    <text>Extended N-terminus.</text>
</comment>
<name>KCJ11_HUMAN</name>
<gene>
    <name type="primary">KCNJ11</name>
</gene>